<comment type="function">
    <molecule>Ubiquitin</molecule>
    <text evidence="5 19 22">Exists either covalently attached to another protein, or free (unanchored). When covalently bound, it is conjugated to target proteins via an isopeptide bond either as a monomer (monoubiquitin), a polymer linked via different Lys residues of the ubiquitin (polyubiquitin chains) or a linear polymer linked via the initiator Met of the ubiquitin (linear polyubiquitin chains). Polyubiquitin chains, when attached to a target protein, have different functions depending on the Lys residue of the ubiquitin that is linked: Lys-6-linked may be involved in DNA repair; Lys-11-linked is involved in ERAD (endoplasmic reticulum-associated degradation) and in cell-cycle regulation; Lys-29-linked is involved in proteotoxic stress response and cell cycle; Lys-33-linked is involved in kinase modification; Lys-48-linked is involved in protein degradation via the proteasome; Lys-63-linked is involved in endocytosis, DNA-damage responses as well as in signaling processes leading to activation of the transcription factor NF-kappa-B. Linear polymer chains formed via attachment by the initiator Met lead to cell signaling. Ubiquitin is usually conjugated to Lys residues of target proteins, however, in rare cases, conjugation to Cys or Ser residues has been observed. When polyubiquitin is free (unanchored-polyubiquitin), it also has distinct roles, such as in activation of protein kinases, and in signaling.</text>
</comment>
<comment type="function">
    <molecule>Large ribosomal subunit protein eL40</molecule>
    <text evidence="7 8 18 20 21">Component of the 60S subunit of the ribosome (PubMed:23169626, PubMed:23636399, PubMed:32669547, PubMed:39048817, PubMed:39103523). Ribosomal protein L40 is essential for translation of a subset of cellular transcripts, and especially for cap-dependent translation of vesicular stomatitis virus mRNAs (PubMed:23169626, PubMed:23636399, PubMed:32669547, PubMed:39048817, PubMed:39103523).</text>
</comment>
<comment type="subunit">
    <text evidence="3 7 8 18 20 21">Ribosomal protein L40 is part of the 60S ribosomal subunit (PubMed:23169626, PubMed:23636399, PubMed:32669547, PubMed:39048817, PubMed:39103523). Interacts with UBQLN1 (via UBA domain) (PubMed:15147878).</text>
</comment>
<comment type="interaction">
    <interactant intactId="EBI-357304">
        <id>P62987</id>
    </interactant>
    <interactant intactId="EBI-2875665">
        <id>Q96B67</id>
        <label>ARRDC3</label>
    </interactant>
    <organismsDiffer>false</organismsDiffer>
    <experiments>3</experiments>
</comment>
<comment type="interaction">
    <interactant intactId="EBI-357304">
        <id>P62987</id>
    </interactant>
    <interactant intactId="EBI-724310">
        <id>Q15038</id>
        <label>DAZAP2</label>
    </interactant>
    <organismsDiffer>false</organismsDiffer>
    <experiments>7</experiments>
</comment>
<comment type="interaction">
    <interactant intactId="EBI-357304">
        <id>P62987</id>
    </interactant>
    <interactant intactId="EBI-25840379">
        <id>Q14203-5</id>
        <label>DCTN1</label>
    </interactant>
    <organismsDiffer>false</organismsDiffer>
    <experiments>3</experiments>
</comment>
<comment type="interaction">
    <interactant intactId="EBI-357304">
        <id>P62987</id>
    </interactant>
    <interactant intactId="EBI-2806959">
        <id>Q6ICB0</id>
        <label>DESI1</label>
    </interactant>
    <organismsDiffer>false</organismsDiffer>
    <experiments>4</experiments>
</comment>
<comment type="interaction">
    <interactant intactId="EBI-357304">
        <id>P62987</id>
    </interactant>
    <interactant intactId="EBI-12135243">
        <id>O95208-2</id>
        <label>EPN2</label>
    </interactant>
    <organismsDiffer>false</organismsDiffer>
    <experiments>3</experiments>
</comment>
<comment type="interaction">
    <interactant intactId="EBI-357304">
        <id>P62987</id>
    </interactant>
    <interactant intactId="EBI-11978259">
        <id>Q92567-2</id>
        <label>FAM168A</label>
    </interactant>
    <organismsDiffer>false</organismsDiffer>
    <experiments>3</experiments>
</comment>
<comment type="interaction">
    <interactant intactId="EBI-357304">
        <id>P62987</id>
    </interactant>
    <interactant intactId="EBI-725647">
        <id>Q99732</id>
        <label>LITAF</label>
    </interactant>
    <organismsDiffer>false</organismsDiffer>
    <experiments>3</experiments>
</comment>
<comment type="interaction">
    <interactant intactId="EBI-357304">
        <id>P62987</id>
    </interactant>
    <interactant intactId="EBI-11980301">
        <id>Q8N3F0</id>
        <label>MTURN</label>
    </interactant>
    <organismsDiffer>false</organismsDiffer>
    <experiments>3</experiments>
</comment>
<comment type="interaction">
    <interactant intactId="EBI-357304">
        <id>P62987</id>
    </interactant>
    <interactant intactId="EBI-373552">
        <id>Q96CS7</id>
        <label>PLEKHB2</label>
    </interactant>
    <organismsDiffer>false</organismsDiffer>
    <experiments>3</experiments>
</comment>
<comment type="interaction">
    <interactant intactId="EBI-357304">
        <id>P62987</id>
    </interactant>
    <interactant intactId="EBI-769257">
        <id>Q9NRQ2</id>
        <label>PLSCR4</label>
    </interactant>
    <organismsDiffer>false</organismsDiffer>
    <experiments>3</experiments>
</comment>
<comment type="interaction">
    <interactant intactId="EBI-357304">
        <id>P62987</id>
    </interactant>
    <interactant intactId="EBI-14093916">
        <id>Q9UJ41-4</id>
        <label>RABGEF1</label>
    </interactant>
    <organismsDiffer>false</organismsDiffer>
    <experiments>3</experiments>
</comment>
<comment type="interaction">
    <interactant intactId="EBI-357304">
        <id>P62987</id>
    </interactant>
    <interactant intactId="EBI-746453">
        <id>P54725</id>
        <label>RAD23A</label>
    </interactant>
    <organismsDiffer>false</organismsDiffer>
    <experiments>3</experiments>
</comment>
<comment type="interaction">
    <interactant intactId="EBI-357304">
        <id>P62987</id>
    </interactant>
    <interactant intactId="EBI-396669">
        <id>Q9Y3C5</id>
        <label>RNF11</label>
    </interactant>
    <organismsDiffer>false</organismsDiffer>
    <experiments>4</experiments>
</comment>
<comment type="interaction">
    <interactant intactId="EBI-357304">
        <id>P62987</id>
    </interactant>
    <interactant intactId="EBI-985879">
        <id>P37840</id>
        <label>SNCA</label>
    </interactant>
    <organismsDiffer>false</organismsDiffer>
    <experiments>3</experiments>
</comment>
<comment type="interaction">
    <interactant intactId="EBI-357304">
        <id>P62987</id>
    </interactant>
    <interactant intactId="EBI-529518">
        <id>Q86VP1</id>
        <label>TAX1BP1</label>
    </interactant>
    <organismsDiffer>false</organismsDiffer>
    <experiments>3</experiments>
</comment>
<comment type="interaction">
    <interactant intactId="EBI-357304">
        <id>P62987</id>
    </interactant>
    <interactant intactId="EBI-2339946">
        <id>Q9C0C9</id>
        <label>UBE2O</label>
    </interactant>
    <organismsDiffer>false</organismsDiffer>
    <experiments>3</experiments>
</comment>
<comment type="interaction">
    <interactant intactId="EBI-357304">
        <id>P62987</id>
    </interactant>
    <interactant intactId="EBI-741480">
        <id>Q9UMX0</id>
        <label>UBQLN1</label>
    </interactant>
    <organismsDiffer>false</organismsDiffer>
    <experiments>3</experiments>
</comment>
<comment type="interaction">
    <interactant intactId="EBI-357304">
        <id>P62987</id>
    </interactant>
    <interactant intactId="EBI-947187">
        <id>Q9UHD9</id>
        <label>UBQLN2</label>
    </interactant>
    <organismsDiffer>false</organismsDiffer>
    <experiments>3</experiments>
</comment>
<comment type="subcellular location">
    <molecule>Ubiquitin</molecule>
    <subcellularLocation>
        <location evidence="1">Cytoplasm</location>
    </subcellularLocation>
    <subcellularLocation>
        <location evidence="1">Nucleus</location>
    </subcellularLocation>
</comment>
<comment type="subcellular location">
    <molecule>Large ribosomal subunit protein eL40</molecule>
    <subcellularLocation>
        <location evidence="20 21">Cytoplasm</location>
    </subcellularLocation>
</comment>
<comment type="PTM">
    <molecule>Ubiquitin</molecule>
    <text evidence="9 10 11 12 13">Phosphorylated at Ser-65 by PINK1 during mitophagy (PubMed:24660806, PubMed:24751536, PubMed:24784582, PubMed:25474007, PubMed:25527291). Phosphorylated ubiquitin specifically binds and activates parkin (PRKN), triggering mitophagy (PubMed:24660806, PubMed:24751536, PubMed:24784582, PubMed:25474007, PubMed:25527291). Phosphorylation does not affect E1-mediated E2 charging of ubiquitin but affects discharging of E2 enzymes to form polyubiquitin chains. It also affects deubiquitination by deubiquitinase enzymes such as USP30 (PubMed:25527291).</text>
</comment>
<comment type="PTM">
    <molecule>Ubiquitin</molecule>
    <text evidence="16">Mono-ADP-ribosylated at the C-terminus by PARP9, a component of the PPAR9-DTX3L complex. ADP-ribosylation requires processing by E1 and E2 enzymes and prevents ubiquitin conjugation to substrates such as histones.</text>
</comment>
<comment type="PTM">
    <molecule>Ubiquitin</molecule>
    <text evidence="17">(Microbial infection) Mono-ADP-ribosylated at Thr-66 by the C.violaceum CteC virulence factor. ADP-ribosylation causes the shutdown of polyubiquitin synthesis and disrupts the recognition and reversal of polyubiquitin.</text>
</comment>
<comment type="PTM">
    <molecule>Large ribosomal subunit protein eL40</molecule>
    <text evidence="20 21">Trimethylation of Lys-98 ('Lys-22' of the mature chain) by SMYD5 promotes translation elongation and protein synthesis.</text>
</comment>
<comment type="miscellaneous">
    <text>Ubiquitin is encoded by 4 different genes. UBA52 and RPS27A genes code for a single copy of ubiquitin fused to the ribosomal proteins eL40 and eS31, respectively. UBB and UBC genes code for a polyubiquitin precursor with exact head to tail repeats, the number of repeats differ between species and strains.</text>
</comment>
<comment type="similarity">
    <text evidence="26">In the N-terminal section; belongs to the ubiquitin family.</text>
</comment>
<comment type="similarity">
    <text evidence="26">In the C-terminal section; belongs to the eukaryotic ribosomal protein eL40 family.</text>
</comment>
<comment type="sequence caution" evidence="26">
    <conflict type="erroneous initiation">
        <sequence resource="EMBL-CDS" id="AAK31162"/>
    </conflict>
    <text>Extended N-terminus.</text>
</comment>
<accession>P62987</accession>
<accession>P02248</accession>
<accession>P02249</accession>
<accession>P02250</accession>
<accession>P14793</accession>
<accession>P62988</accession>
<accession>Q29120</accession>
<accession>Q6LBL4</accession>
<accession>Q6LDU5</accession>
<accession>Q8WYN8</accession>
<accession>Q91887</accession>
<accession>Q91888</accession>
<accession>Q9BWD6</accession>
<accession>Q9BX98</accession>
<accession>Q9UEF2</accession>
<accession>Q9UEG1</accession>
<accession>Q9UEK8</accession>
<accession>Q9UPK7</accession>
<feature type="chain" id="PRO_0000396433" description="Ubiquitin">
    <location>
        <begin position="1"/>
        <end position="76"/>
    </location>
</feature>
<feature type="chain" id="PRO_0000396434" description="Large ribosomal subunit protein eL40">
    <location>
        <begin position="77"/>
        <end position="128"/>
    </location>
</feature>
<feature type="domain" description="Ubiquitin-like" evidence="2">
    <location>
        <begin position="1"/>
        <end position="76"/>
    </location>
</feature>
<feature type="site" description="Interacts with activating enzyme">
    <location>
        <position position="54"/>
    </location>
</feature>
<feature type="site" description="Essential for function">
    <location>
        <position position="68"/>
    </location>
</feature>
<feature type="site" description="Interacts with activating enzyme">
    <location>
        <position position="72"/>
    </location>
</feature>
<feature type="modified residue" description="Phosphoserine; by PINK1" evidence="9 10 11 12 13">
    <location>
        <position position="65"/>
    </location>
</feature>
<feature type="modified residue" description="(Microbial infection) ADP-ribosylthreonine" evidence="17">
    <location>
        <position position="66"/>
    </location>
</feature>
<feature type="modified residue" description="ADP-ribosylglycine" evidence="16">
    <location>
        <position position="76"/>
    </location>
</feature>
<feature type="modified residue" description="N6,N6,N6-trimethyllysine" evidence="20 21">
    <location>
        <position position="98"/>
    </location>
</feature>
<feature type="cross-link" description="Glycyl lysine isopeptide (Lys-Gly) (interchain with G-Cter in ubiquitin)" evidence="4">
    <location>
        <position position="6"/>
    </location>
</feature>
<feature type="cross-link" description="Glycyl lysine isopeptide (Lys-Gly) (interchain with G-Cter in ubiquitin)" evidence="4 5">
    <location>
        <position position="11"/>
    </location>
</feature>
<feature type="cross-link" description="Glycyl lysine isopeptide (Lys-Gly) (interchain with G-Cter in ubiquitin)" evidence="27">
    <location>
        <position position="27"/>
    </location>
</feature>
<feature type="cross-link" description="Glycyl lysine isopeptide (Lys-Gly) (interchain with G-Cter in ubiquitin)" evidence="5 14 15 19">
    <location>
        <position position="29"/>
    </location>
</feature>
<feature type="cross-link" description="Glycyl lysine isopeptide (Lys-Gly) (interchain with G-Cter in ubiquitin)" evidence="15">
    <location>
        <position position="33"/>
    </location>
</feature>
<feature type="cross-link" description="Glycyl lysine isopeptide (Lys-Gly) (interchain with G-Cter in ubiquitin)" evidence="4 5">
    <location>
        <position position="48"/>
    </location>
</feature>
<feature type="cross-link" description="Glycyl lysine isopeptide (Lys-Gly) (interchain with G-Cter in ubiquitin)" evidence="5 6">
    <location>
        <position position="63"/>
    </location>
</feature>
<feature type="cross-link" description="Glycyl lysine isopeptide (Gly-Lys) (interchain with K-? in acceptor proteins)">
    <location>
        <position position="76"/>
    </location>
</feature>
<feature type="mutagenesis site" description="No effect on HLTF-mediated polyubiquitination of PCNA." evidence="6">
    <original>K</original>
    <variation>R</variation>
    <location>
        <position position="48"/>
    </location>
</feature>
<feature type="mutagenesis site" description="Abolishes HLTF-mediated polyubiquitination of PCNA." evidence="6">
    <original>K</original>
    <variation>R</variation>
    <location>
        <position position="63"/>
    </location>
</feature>
<feature type="mutagenesis site" description="Prevents phosphorylation in case of mitophagy. Impaired translocation of PRKN to mitochondria." evidence="9 10 11 12">
    <original>S</original>
    <variation>A</variation>
    <location>
        <position position="65"/>
    </location>
</feature>
<feature type="mutagenesis site" description="Phosphomimetic mutant that binds and activates PRKN." evidence="10">
    <original>S</original>
    <variation>D</variation>
    <location>
        <position position="65"/>
    </location>
</feature>
<feature type="mutagenesis site" description="Phosphomimetic mutant that can recruit PRKN to mitochondria." evidence="12">
    <original>S</original>
    <variation>G</variation>
    <location>
        <position position="65"/>
    </location>
</feature>
<feature type="mutagenesis site" description="Loss of DTX3L-mediated polyubiquitination of histone H3 and H4." evidence="16">
    <original>H</original>
    <variation>G</variation>
    <location>
        <position position="68"/>
    </location>
</feature>
<feature type="mutagenesis site" description="No effect on ADP-ribosylation." evidence="16">
    <original>R</original>
    <variation>G</variation>
    <location>
        <position position="72"/>
    </location>
</feature>
<feature type="mutagenesis site" description="No effect on ADP-ribosylation, when associated with K-74." evidence="16">
    <original>R</original>
    <variation>K</variation>
    <location>
        <position position="72"/>
    </location>
</feature>
<feature type="mutagenesis site" description="No effect on ADP-ribosylation." evidence="16">
    <original>R</original>
    <variation>G</variation>
    <location>
        <position position="74"/>
    </location>
</feature>
<feature type="mutagenesis site" description="No effect on ADP-ribosylation, when associated with K-72." evidence="16">
    <original>R</original>
    <variation>K</variation>
    <location>
        <position position="74"/>
    </location>
</feature>
<feature type="mutagenesis site" description="Loss of ADP-ribosylation." evidence="16">
    <original>G</original>
    <variation>A</variation>
    <location>
        <position position="76"/>
    </location>
</feature>
<feature type="mutagenesis site" description="Abolished methylation by SMYD5, leading to decreased translation initiation and protein synthesis." evidence="21">
    <original>K</original>
    <variation>R</variation>
    <variation>A</variation>
    <location>
        <position position="98"/>
    </location>
</feature>
<feature type="strand" evidence="33">
    <location>
        <begin position="2"/>
        <end position="7"/>
    </location>
</feature>
<feature type="strand" evidence="34">
    <location>
        <begin position="8"/>
        <end position="10"/>
    </location>
</feature>
<feature type="strand" evidence="33">
    <location>
        <begin position="12"/>
        <end position="16"/>
    </location>
</feature>
<feature type="strand" evidence="30">
    <location>
        <begin position="19"/>
        <end position="21"/>
    </location>
</feature>
<feature type="helix" evidence="33">
    <location>
        <begin position="23"/>
        <end position="34"/>
    </location>
</feature>
<feature type="helix" evidence="33">
    <location>
        <begin position="38"/>
        <end position="40"/>
    </location>
</feature>
<feature type="strand" evidence="33">
    <location>
        <begin position="41"/>
        <end position="45"/>
    </location>
</feature>
<feature type="strand" evidence="32">
    <location>
        <begin position="48"/>
        <end position="50"/>
    </location>
</feature>
<feature type="strand" evidence="31">
    <location>
        <begin position="54"/>
        <end position="56"/>
    </location>
</feature>
<feature type="helix" evidence="33">
    <location>
        <begin position="57"/>
        <end position="59"/>
    </location>
</feature>
<feature type="strand" evidence="33">
    <location>
        <begin position="66"/>
        <end position="71"/>
    </location>
</feature>
<name>RL40_HUMAN</name>
<dbReference type="EMBL" id="X56998">
    <property type="protein sequence ID" value="CAA40313.1"/>
    <property type="molecule type" value="mRNA"/>
</dbReference>
<dbReference type="EMBL" id="X56997">
    <property type="protein sequence ID" value="CAA40312.1"/>
    <property type="molecule type" value="Genomic_DNA"/>
</dbReference>
<dbReference type="EMBL" id="X56999">
    <property type="protein sequence ID" value="CAA40314.1"/>
    <property type="molecule type" value="mRNA"/>
</dbReference>
<dbReference type="EMBL" id="AF348700">
    <property type="protein sequence ID" value="AAK31162.1"/>
    <property type="status" value="ALT_INIT"/>
    <property type="molecule type" value="mRNA"/>
</dbReference>
<dbReference type="EMBL" id="AC005253">
    <property type="protein sequence ID" value="AAC25582.1"/>
    <property type="molecule type" value="Genomic_DNA"/>
</dbReference>
<dbReference type="EMBL" id="Y00361">
    <property type="protein sequence ID" value="CAA68439.1"/>
    <property type="molecule type" value="mRNA"/>
</dbReference>
<dbReference type="CCDS" id="CCDS12382.1"/>
<dbReference type="PIR" id="S34428">
    <property type="entry name" value="UQHUR"/>
</dbReference>
<dbReference type="RefSeq" id="NP_001029102.1">
    <property type="nucleotide sequence ID" value="NM_001033930.3"/>
</dbReference>
<dbReference type="RefSeq" id="NP_001307946.1">
    <property type="nucleotide sequence ID" value="NM_001321017.2"/>
</dbReference>
<dbReference type="RefSeq" id="NP_001307947.1">
    <property type="nucleotide sequence ID" value="NM_001321018.2"/>
</dbReference>
<dbReference type="RefSeq" id="NP_001307948.1">
    <property type="nucleotide sequence ID" value="NM_001321019.2"/>
</dbReference>
<dbReference type="RefSeq" id="NP_001307949.1">
    <property type="nucleotide sequence ID" value="NM_001321020.2"/>
</dbReference>
<dbReference type="RefSeq" id="NP_003324.1">
    <property type="nucleotide sequence ID" value="NM_003333.5"/>
</dbReference>
<dbReference type="PDB" id="2LJ5">
    <property type="method" value="NMR"/>
    <property type="chains" value="A=1-76"/>
</dbReference>
<dbReference type="PDB" id="2MBH">
    <property type="method" value="NMR"/>
    <property type="chains" value="A=1-76"/>
</dbReference>
<dbReference type="PDB" id="2MJB">
    <property type="method" value="NMR"/>
    <property type="chains" value="A=1-76"/>
</dbReference>
<dbReference type="PDB" id="2MUR">
    <property type="method" value="NMR"/>
    <property type="chains" value="B=1-76"/>
</dbReference>
<dbReference type="PDB" id="2N3U">
    <property type="method" value="NMR"/>
    <property type="chains" value="B/C=1-76"/>
</dbReference>
<dbReference type="PDB" id="2N3V">
    <property type="method" value="NMR"/>
    <property type="chains" value="B/C=1-76"/>
</dbReference>
<dbReference type="PDB" id="2N3W">
    <property type="method" value="NMR"/>
    <property type="chains" value="B/C=1-76"/>
</dbReference>
<dbReference type="PDB" id="2NBD">
    <property type="method" value="NMR"/>
    <property type="chains" value="A=1-76"/>
</dbReference>
<dbReference type="PDB" id="2NBE">
    <property type="method" value="NMR"/>
    <property type="chains" value="A=1-76"/>
</dbReference>
<dbReference type="PDB" id="2RSU">
    <property type="method" value="NMR"/>
    <property type="chains" value="A=1-76"/>
</dbReference>
<dbReference type="PDB" id="4HJK">
    <property type="method" value="X-ray"/>
    <property type="resolution" value="1.78 A"/>
    <property type="chains" value="A=1-76"/>
</dbReference>
<dbReference type="PDB" id="4JIO">
    <property type="method" value="X-ray"/>
    <property type="resolution" value="3.60 A"/>
    <property type="chains" value="U=1-76"/>
</dbReference>
<dbReference type="PDB" id="4P4H">
    <property type="method" value="X-ray"/>
    <property type="resolution" value="3.40 A"/>
    <property type="chains" value="S/T/U/W/X=1-76"/>
</dbReference>
<dbReference type="PDB" id="4PIG">
    <property type="method" value="X-ray"/>
    <property type="resolution" value="1.95 A"/>
    <property type="chains" value="A/B/C/D=1-76"/>
</dbReference>
<dbReference type="PDB" id="4PIH">
    <property type="method" value="X-ray"/>
    <property type="resolution" value="1.50 A"/>
    <property type="chains" value="A/B=1-76"/>
</dbReference>
<dbReference type="PDB" id="4PIJ">
    <property type="method" value="X-ray"/>
    <property type="resolution" value="1.50 A"/>
    <property type="chains" value="A/B=1-75"/>
</dbReference>
<dbReference type="PDB" id="4RF0">
    <property type="method" value="X-ray"/>
    <property type="resolution" value="2.80 A"/>
    <property type="chains" value="B=1-75"/>
</dbReference>
<dbReference type="PDB" id="4RF1">
    <property type="method" value="X-ray"/>
    <property type="resolution" value="2.15 A"/>
    <property type="chains" value="B=1-75"/>
</dbReference>
<dbReference type="PDB" id="4S1Z">
    <property type="method" value="X-ray"/>
    <property type="resolution" value="3.03 A"/>
    <property type="chains" value="A/B/C/D/E=1-76"/>
</dbReference>
<dbReference type="PDB" id="4UG0">
    <property type="method" value="EM"/>
    <property type="chains" value="Lm=1-128"/>
</dbReference>
<dbReference type="PDB" id="4V6X">
    <property type="method" value="EM"/>
    <property type="resolution" value="5.00 A"/>
    <property type="chains" value="Cm=77-128"/>
</dbReference>
<dbReference type="PDB" id="4XKL">
    <property type="method" value="X-ray"/>
    <property type="resolution" value="2.10 A"/>
    <property type="chains" value="A/C=1-76"/>
</dbReference>
<dbReference type="PDB" id="5AJ0">
    <property type="method" value="EM"/>
    <property type="resolution" value="3.50 A"/>
    <property type="chains" value="Am=1-128"/>
</dbReference>
<dbReference type="PDB" id="5GO7">
    <property type="method" value="X-ray"/>
    <property type="resolution" value="1.80 A"/>
    <property type="chains" value="B=10-76"/>
</dbReference>
<dbReference type="PDB" id="5GO8">
    <property type="method" value="X-ray"/>
    <property type="resolution" value="2.21 A"/>
    <property type="chains" value="B=10-76"/>
</dbReference>
<dbReference type="PDB" id="5GOB">
    <property type="method" value="X-ray"/>
    <property type="resolution" value="1.15 A"/>
    <property type="chains" value="B=10-76"/>
</dbReference>
<dbReference type="PDB" id="5GOC">
    <property type="method" value="X-ray"/>
    <property type="resolution" value="1.73 A"/>
    <property type="chains" value="D=10-76"/>
</dbReference>
<dbReference type="PDB" id="5GOD">
    <property type="method" value="X-ray"/>
    <property type="resolution" value="1.15 A"/>
    <property type="chains" value="C/D=10-76"/>
</dbReference>
<dbReference type="PDB" id="5GOG">
    <property type="method" value="X-ray"/>
    <property type="resolution" value="1.98 A"/>
    <property type="chains" value="B=10-76"/>
</dbReference>
<dbReference type="PDB" id="5GOH">
    <property type="method" value="X-ray"/>
    <property type="resolution" value="1.95 A"/>
    <property type="chains" value="D=10-76"/>
</dbReference>
<dbReference type="PDB" id="5GOI">
    <property type="method" value="X-ray"/>
    <property type="resolution" value="1.59 A"/>
    <property type="chains" value="C/D=10-76"/>
</dbReference>
<dbReference type="PDB" id="5GOJ">
    <property type="method" value="X-ray"/>
    <property type="resolution" value="1.55 A"/>
    <property type="chains" value="B=10-76"/>
</dbReference>
<dbReference type="PDB" id="5GOK">
    <property type="method" value="X-ray"/>
    <property type="resolution" value="1.84 A"/>
    <property type="chains" value="B=10-76"/>
</dbReference>
<dbReference type="PDB" id="5HPK">
    <property type="method" value="X-ray"/>
    <property type="resolution" value="2.43 A"/>
    <property type="chains" value="B=7-79"/>
</dbReference>
<dbReference type="PDB" id="5HPL">
    <property type="method" value="X-ray"/>
    <property type="resolution" value="2.31 A"/>
    <property type="chains" value="C/D=1-77"/>
</dbReference>
<dbReference type="PDB" id="5HPS">
    <property type="method" value="X-ray"/>
    <property type="resolution" value="2.05 A"/>
    <property type="chains" value="B=1-83"/>
</dbReference>
<dbReference type="PDB" id="5HPT">
    <property type="method" value="X-ray"/>
    <property type="resolution" value="2.84 A"/>
    <property type="chains" value="B/E/H=5-78"/>
</dbReference>
<dbReference type="PDB" id="5J26">
    <property type="method" value="X-ray"/>
    <property type="resolution" value="2.50 A"/>
    <property type="chains" value="B=1-75"/>
</dbReference>
<dbReference type="PDB" id="5J8P">
    <property type="method" value="X-ray"/>
    <property type="resolution" value="1.55 A"/>
    <property type="chains" value="A=1-76, B=10-75"/>
</dbReference>
<dbReference type="PDB" id="5JBV">
    <property type="method" value="X-ray"/>
    <property type="resolution" value="2.10 A"/>
    <property type="chains" value="A=1-76, B=10-75"/>
</dbReference>
<dbReference type="PDB" id="5JBY">
    <property type="method" value="X-ray"/>
    <property type="resolution" value="1.99 A"/>
    <property type="chains" value="A/C/E=1-76, B/D/F=10-75"/>
</dbReference>
<dbReference type="PDB" id="5LKS">
    <property type="method" value="EM"/>
    <property type="resolution" value="3.60 A"/>
    <property type="chains" value="Lm=1-128"/>
</dbReference>
<dbReference type="PDB" id="5T2C">
    <property type="method" value="EM"/>
    <property type="resolution" value="3.60 A"/>
    <property type="chains" value="g=1-128"/>
</dbReference>
<dbReference type="PDB" id="6IP5">
    <property type="method" value="EM"/>
    <property type="resolution" value="3.90 A"/>
    <property type="chains" value="2g=1-128"/>
</dbReference>
<dbReference type="PDB" id="6IP6">
    <property type="method" value="EM"/>
    <property type="resolution" value="4.50 A"/>
    <property type="chains" value="2g=1-128"/>
</dbReference>
<dbReference type="PDB" id="6IP8">
    <property type="method" value="EM"/>
    <property type="resolution" value="3.90 A"/>
    <property type="chains" value="2g=1-128"/>
</dbReference>
<dbReference type="PDB" id="6LQM">
    <property type="method" value="EM"/>
    <property type="resolution" value="3.09 A"/>
    <property type="chains" value="R=1-128"/>
</dbReference>
<dbReference type="PDB" id="6OLE">
    <property type="method" value="EM"/>
    <property type="resolution" value="3.10 A"/>
    <property type="chains" value="n=78-127"/>
</dbReference>
<dbReference type="PDB" id="6OLF">
    <property type="method" value="EM"/>
    <property type="resolution" value="3.90 A"/>
    <property type="chains" value="n=78-127"/>
</dbReference>
<dbReference type="PDB" id="6OLG">
    <property type="method" value="EM"/>
    <property type="resolution" value="3.40 A"/>
    <property type="chains" value="Am=78-127"/>
</dbReference>
<dbReference type="PDB" id="6OLI">
    <property type="method" value="EM"/>
    <property type="resolution" value="3.50 A"/>
    <property type="chains" value="n=78-127"/>
</dbReference>
<dbReference type="PDB" id="6OLZ">
    <property type="method" value="EM"/>
    <property type="resolution" value="3.90 A"/>
    <property type="chains" value="Am=78-127"/>
</dbReference>
<dbReference type="PDB" id="6OM0">
    <property type="method" value="EM"/>
    <property type="resolution" value="3.10 A"/>
    <property type="chains" value="n=78-127"/>
</dbReference>
<dbReference type="PDB" id="6OM7">
    <property type="method" value="EM"/>
    <property type="resolution" value="3.70 A"/>
    <property type="chains" value="n=78-127"/>
</dbReference>
<dbReference type="PDB" id="6QZP">
    <property type="method" value="EM"/>
    <property type="resolution" value="2.90 A"/>
    <property type="chains" value="Lm=77-128"/>
</dbReference>
<dbReference type="PDB" id="6XA1">
    <property type="method" value="EM"/>
    <property type="resolution" value="2.80 A"/>
    <property type="chains" value="Lm=77-128"/>
</dbReference>
<dbReference type="PDB" id="6Y0G">
    <property type="method" value="EM"/>
    <property type="resolution" value="3.20 A"/>
    <property type="chains" value="Lm=1-128"/>
</dbReference>
<dbReference type="PDB" id="6Y2L">
    <property type="method" value="EM"/>
    <property type="resolution" value="3.00 A"/>
    <property type="chains" value="Lm=1-128"/>
</dbReference>
<dbReference type="PDB" id="6Y57">
    <property type="method" value="EM"/>
    <property type="resolution" value="3.50 A"/>
    <property type="chains" value="Lm=1-128"/>
</dbReference>
<dbReference type="PDB" id="6Y6X">
    <property type="method" value="EM"/>
    <property type="resolution" value="2.80 A"/>
    <property type="chains" value="Lm=77-128"/>
</dbReference>
<dbReference type="PDB" id="6Z6L">
    <property type="method" value="EM"/>
    <property type="resolution" value="3.00 A"/>
    <property type="chains" value="Lm=1-128"/>
</dbReference>
<dbReference type="PDB" id="6Z6M">
    <property type="method" value="EM"/>
    <property type="resolution" value="3.10 A"/>
    <property type="chains" value="Lm=1-128"/>
</dbReference>
<dbReference type="PDB" id="6Z6N">
    <property type="method" value="EM"/>
    <property type="resolution" value="2.90 A"/>
    <property type="chains" value="Lm=1-128"/>
</dbReference>
<dbReference type="PDB" id="6ZM7">
    <property type="method" value="EM"/>
    <property type="resolution" value="2.70 A"/>
    <property type="chains" value="Lm=1-128"/>
</dbReference>
<dbReference type="PDB" id="6ZME">
    <property type="method" value="EM"/>
    <property type="resolution" value="3.00 A"/>
    <property type="chains" value="Lm=1-128"/>
</dbReference>
<dbReference type="PDB" id="6ZMI">
    <property type="method" value="EM"/>
    <property type="resolution" value="2.60 A"/>
    <property type="chains" value="Lm=1-128"/>
</dbReference>
<dbReference type="PDB" id="6ZMO">
    <property type="method" value="EM"/>
    <property type="resolution" value="3.10 A"/>
    <property type="chains" value="Lm=1-128"/>
</dbReference>
<dbReference type="PDB" id="7AY1">
    <property type="method" value="EM"/>
    <property type="resolution" value="3.70 A"/>
    <property type="chains" value="C=1-76"/>
</dbReference>
<dbReference type="PDB" id="7BHP">
    <property type="method" value="EM"/>
    <property type="resolution" value="3.30 A"/>
    <property type="chains" value="Lm=1-128"/>
</dbReference>
<dbReference type="PDB" id="7F5S">
    <property type="method" value="EM"/>
    <property type="resolution" value="2.72 A"/>
    <property type="chains" value="Lm=1-128"/>
</dbReference>
<dbReference type="PDB" id="7M3Q">
    <property type="method" value="X-ray"/>
    <property type="resolution" value="2.50 A"/>
    <property type="chains" value="B=1-74"/>
</dbReference>
<dbReference type="PDB" id="7OWC">
    <property type="method" value="X-ray"/>
    <property type="resolution" value="1.85 A"/>
    <property type="chains" value="A/C=1-76"/>
</dbReference>
<dbReference type="PDB" id="7UN3">
    <property type="method" value="EM"/>
    <property type="resolution" value="3.50 A"/>
    <property type="chains" value="A/D=1-76"/>
</dbReference>
<dbReference type="PDB" id="7WFC">
    <property type="method" value="X-ray"/>
    <property type="resolution" value="2.60 A"/>
    <property type="chains" value="B=1-76"/>
</dbReference>
<dbReference type="PDB" id="7XD0">
    <property type="method" value="EM"/>
    <property type="resolution" value="3.48 A"/>
    <property type="chains" value="K/L=1-76"/>
</dbReference>
<dbReference type="PDB" id="7XNX">
    <property type="method" value="EM"/>
    <property type="resolution" value="2.70 A"/>
    <property type="chains" value="Lm=1-128"/>
</dbReference>
<dbReference type="PDB" id="7XNY">
    <property type="method" value="EM"/>
    <property type="resolution" value="2.50 A"/>
    <property type="chains" value="Lm=1-128"/>
</dbReference>
<dbReference type="PDB" id="7ZF1">
    <property type="method" value="EM"/>
    <property type="resolution" value="4.14 A"/>
    <property type="chains" value="C=1-76"/>
</dbReference>
<dbReference type="PDB" id="7ZH3">
    <property type="method" value="EM"/>
    <property type="resolution" value="2.50 A"/>
    <property type="chains" value="C=1-76"/>
</dbReference>
<dbReference type="PDB" id="7ZH4">
    <property type="method" value="EM"/>
    <property type="resolution" value="2.49 A"/>
    <property type="chains" value="C=1-76"/>
</dbReference>
<dbReference type="PDB" id="8A3D">
    <property type="method" value="EM"/>
    <property type="resolution" value="1.67 A"/>
    <property type="chains" value="g=1-128"/>
</dbReference>
<dbReference type="PDB" id="8IFD">
    <property type="method" value="EM"/>
    <property type="resolution" value="2.59 A"/>
    <property type="chains" value="2g=1-128"/>
</dbReference>
<dbReference type="PDB" id="8IFE">
    <property type="method" value="EM"/>
    <property type="resolution" value="2.57 A"/>
    <property type="chains" value="2g=1-128"/>
</dbReference>
<dbReference type="PDB" id="8IK6">
    <property type="method" value="X-ray"/>
    <property type="resolution" value="3.30 A"/>
    <property type="chains" value="B/D=1-75"/>
</dbReference>
<dbReference type="PDB" id="8IKM">
    <property type="method" value="X-ray"/>
    <property type="resolution" value="1.92 A"/>
    <property type="chains" value="B=1-75"/>
</dbReference>
<dbReference type="PDB" id="8IKT">
    <property type="method" value="X-ray"/>
    <property type="resolution" value="2.60 A"/>
    <property type="chains" value="B=1-75"/>
</dbReference>
<dbReference type="PDB" id="8IKV">
    <property type="method" value="X-ray"/>
    <property type="resolution" value="2.35 A"/>
    <property type="chains" value="B/D=1-75"/>
</dbReference>
<dbReference type="PDB" id="8IPJ">
    <property type="method" value="X-ray"/>
    <property type="resolution" value="2.00 A"/>
    <property type="chains" value="B=1-72"/>
</dbReference>
<dbReference type="PDB" id="8JDJ">
    <property type="method" value="EM"/>
    <property type="resolution" value="2.50 A"/>
    <property type="chains" value="r=1-128"/>
</dbReference>
<dbReference type="PDB" id="8JDK">
    <property type="method" value="EM"/>
    <property type="resolution" value="2.26 A"/>
    <property type="chains" value="r=1-128"/>
</dbReference>
<dbReference type="PDB" id="8JDL">
    <property type="method" value="EM"/>
    <property type="resolution" value="2.42 A"/>
    <property type="chains" value="r=1-128"/>
</dbReference>
<dbReference type="PDB" id="8JDM">
    <property type="method" value="EM"/>
    <property type="resolution" value="2.67 A"/>
    <property type="chains" value="r=1-128"/>
</dbReference>
<dbReference type="PDB" id="8K2C">
    <property type="method" value="EM"/>
    <property type="resolution" value="2.40 A"/>
    <property type="chains" value="Lm=1-128"/>
</dbReference>
<dbReference type="PDB" id="8OHD">
    <property type="method" value="EM"/>
    <property type="resolution" value="3.10 A"/>
    <property type="chains" value="Lm=1-128"/>
</dbReference>
<dbReference type="PDB" id="8OJ0">
    <property type="method" value="EM"/>
    <property type="resolution" value="3.30 A"/>
    <property type="chains" value="Lm=1-128"/>
</dbReference>
<dbReference type="PDB" id="8OJ5">
    <property type="method" value="EM"/>
    <property type="resolution" value="2.90 A"/>
    <property type="chains" value="Lm=1-128"/>
</dbReference>
<dbReference type="PDB" id="8OJ8">
    <property type="method" value="EM"/>
    <property type="resolution" value="3.30 A"/>
    <property type="chains" value="Lm=1-128"/>
</dbReference>
<dbReference type="PDB" id="8QFD">
    <property type="method" value="EM"/>
    <property type="resolution" value="2.20 A"/>
    <property type="chains" value="m=1-128"/>
</dbReference>
<dbReference type="PDB" id="8QOI">
    <property type="method" value="EM"/>
    <property type="resolution" value="1.90 A"/>
    <property type="chains" value="Lm=1-128"/>
</dbReference>
<dbReference type="PDB" id="8QYX">
    <property type="method" value="EM"/>
    <property type="resolution" value="1.78 A"/>
    <property type="chains" value="g1=1-128"/>
</dbReference>
<dbReference type="PDB" id="8UKB">
    <property type="method" value="EM"/>
    <property type="resolution" value="3.05 A"/>
    <property type="chains" value="Lm=77-128"/>
</dbReference>
<dbReference type="PDB" id="8XSX">
    <property type="method" value="EM"/>
    <property type="resolution" value="2.40 A"/>
    <property type="chains" value="Lm=1-128"/>
</dbReference>
<dbReference type="PDB" id="8XSY">
    <property type="method" value="EM"/>
    <property type="resolution" value="3.00 A"/>
    <property type="chains" value="Lm=1-128"/>
</dbReference>
<dbReference type="PDB" id="8XSZ">
    <property type="method" value="EM"/>
    <property type="resolution" value="3.20 A"/>
    <property type="chains" value="Lm=1-128"/>
</dbReference>
<dbReference type="PDB" id="8Y0W">
    <property type="method" value="EM"/>
    <property type="resolution" value="3.40 A"/>
    <property type="chains" value="Lm=1-128"/>
</dbReference>
<dbReference type="PDB" id="8Y0X">
    <property type="method" value="EM"/>
    <property type="resolution" value="3.30 A"/>
    <property type="chains" value="Lm=1-128"/>
</dbReference>
<dbReference type="PDB" id="8YOO">
    <property type="method" value="EM"/>
    <property type="resolution" value="2.00 A"/>
    <property type="chains" value="Lm=1-128"/>
</dbReference>
<dbReference type="PDB" id="8YOP">
    <property type="method" value="EM"/>
    <property type="resolution" value="2.20 A"/>
    <property type="chains" value="Lm=1-128"/>
</dbReference>
<dbReference type="PDB" id="9C3H">
    <property type="method" value="EM"/>
    <property type="resolution" value="2.00 A"/>
    <property type="chains" value="Lo=1-128"/>
</dbReference>
<dbReference type="PDB" id="9G8M">
    <property type="method" value="EM"/>
    <property type="resolution" value="3.30 A"/>
    <property type="chains" value="Lm=1-128"/>
</dbReference>
<dbReference type="PDB" id="9GMO">
    <property type="method" value="EM"/>
    <property type="resolution" value="2.59 A"/>
    <property type="chains" value="g=1-128"/>
</dbReference>
<dbReference type="PDBsum" id="2LJ5"/>
<dbReference type="PDBsum" id="2MBH"/>
<dbReference type="PDBsum" id="2MJB"/>
<dbReference type="PDBsum" id="2MUR"/>
<dbReference type="PDBsum" id="2N3U"/>
<dbReference type="PDBsum" id="2N3V"/>
<dbReference type="PDBsum" id="2N3W"/>
<dbReference type="PDBsum" id="2NBD"/>
<dbReference type="PDBsum" id="2NBE"/>
<dbReference type="PDBsum" id="2RSU"/>
<dbReference type="PDBsum" id="4HJK"/>
<dbReference type="PDBsum" id="4JIO"/>
<dbReference type="PDBsum" id="4P4H"/>
<dbReference type="PDBsum" id="4PIG"/>
<dbReference type="PDBsum" id="4PIH"/>
<dbReference type="PDBsum" id="4PIJ"/>
<dbReference type="PDBsum" id="4RF0"/>
<dbReference type="PDBsum" id="4RF1"/>
<dbReference type="PDBsum" id="4S1Z"/>
<dbReference type="PDBsum" id="4UG0"/>
<dbReference type="PDBsum" id="4V6X"/>
<dbReference type="PDBsum" id="4XKL"/>
<dbReference type="PDBsum" id="5AJ0"/>
<dbReference type="PDBsum" id="5GO7"/>
<dbReference type="PDBsum" id="5GO8"/>
<dbReference type="PDBsum" id="5GOB"/>
<dbReference type="PDBsum" id="5GOC"/>
<dbReference type="PDBsum" id="5GOD"/>
<dbReference type="PDBsum" id="5GOG"/>
<dbReference type="PDBsum" id="5GOH"/>
<dbReference type="PDBsum" id="5GOI"/>
<dbReference type="PDBsum" id="5GOJ"/>
<dbReference type="PDBsum" id="5GOK"/>
<dbReference type="PDBsum" id="5HPK"/>
<dbReference type="PDBsum" id="5HPL"/>
<dbReference type="PDBsum" id="5HPS"/>
<dbReference type="PDBsum" id="5HPT"/>
<dbReference type="PDBsum" id="5J26"/>
<dbReference type="PDBsum" id="5J8P"/>
<dbReference type="PDBsum" id="5JBV"/>
<dbReference type="PDBsum" id="5JBY"/>
<dbReference type="PDBsum" id="5LKS"/>
<dbReference type="PDBsum" id="5T2C"/>
<dbReference type="PDBsum" id="6IP5"/>
<dbReference type="PDBsum" id="6IP6"/>
<dbReference type="PDBsum" id="6IP8"/>
<dbReference type="PDBsum" id="6LQM"/>
<dbReference type="PDBsum" id="6OLE"/>
<dbReference type="PDBsum" id="6OLF"/>
<dbReference type="PDBsum" id="6OLG"/>
<dbReference type="PDBsum" id="6OLI"/>
<dbReference type="PDBsum" id="6OLZ"/>
<dbReference type="PDBsum" id="6OM0"/>
<dbReference type="PDBsum" id="6OM7"/>
<dbReference type="PDBsum" id="6QZP"/>
<dbReference type="PDBsum" id="6XA1"/>
<dbReference type="PDBsum" id="6Y0G"/>
<dbReference type="PDBsum" id="6Y2L"/>
<dbReference type="PDBsum" id="6Y57"/>
<dbReference type="PDBsum" id="6Y6X"/>
<dbReference type="PDBsum" id="6Z6L"/>
<dbReference type="PDBsum" id="6Z6M"/>
<dbReference type="PDBsum" id="6Z6N"/>
<dbReference type="PDBsum" id="6ZM7"/>
<dbReference type="PDBsum" id="6ZME"/>
<dbReference type="PDBsum" id="6ZMI"/>
<dbReference type="PDBsum" id="6ZMO"/>
<dbReference type="PDBsum" id="7AY1"/>
<dbReference type="PDBsum" id="7BHP"/>
<dbReference type="PDBsum" id="7F5S"/>
<dbReference type="PDBsum" id="7M3Q"/>
<dbReference type="PDBsum" id="7OWC"/>
<dbReference type="PDBsum" id="7UN3"/>
<dbReference type="PDBsum" id="7WFC"/>
<dbReference type="PDBsum" id="7XD0"/>
<dbReference type="PDBsum" id="7XNX"/>
<dbReference type="PDBsum" id="7XNY"/>
<dbReference type="PDBsum" id="7ZF1"/>
<dbReference type="PDBsum" id="7ZH3"/>
<dbReference type="PDBsum" id="7ZH4"/>
<dbReference type="PDBsum" id="8A3D"/>
<dbReference type="PDBsum" id="8IFD"/>
<dbReference type="PDBsum" id="8IFE"/>
<dbReference type="PDBsum" id="8IK6"/>
<dbReference type="PDBsum" id="8IKM"/>
<dbReference type="PDBsum" id="8IKT"/>
<dbReference type="PDBsum" id="8IKV"/>
<dbReference type="PDBsum" id="8IPJ"/>
<dbReference type="PDBsum" id="8JDJ"/>
<dbReference type="PDBsum" id="8JDK"/>
<dbReference type="PDBsum" id="8JDL"/>
<dbReference type="PDBsum" id="8JDM"/>
<dbReference type="PDBsum" id="8K2C"/>
<dbReference type="PDBsum" id="8OHD"/>
<dbReference type="PDBsum" id="8OJ0"/>
<dbReference type="PDBsum" id="8OJ5"/>
<dbReference type="PDBsum" id="8OJ8"/>
<dbReference type="PDBsum" id="8QFD"/>
<dbReference type="PDBsum" id="8QOI"/>
<dbReference type="PDBsum" id="8QYX"/>
<dbReference type="PDBsum" id="8UKB"/>
<dbReference type="PDBsum" id="8XSX"/>
<dbReference type="PDBsum" id="8XSY"/>
<dbReference type="PDBsum" id="8XSZ"/>
<dbReference type="PDBsum" id="8Y0W"/>
<dbReference type="PDBsum" id="8Y0X"/>
<dbReference type="PDBsum" id="8YOO"/>
<dbReference type="PDBsum" id="8YOP"/>
<dbReference type="PDBsum" id="9C3H"/>
<dbReference type="PDBsum" id="9G8M"/>
<dbReference type="PDBsum" id="9GMO"/>
<dbReference type="EMDB" id="EMD-0948"/>
<dbReference type="EMDB" id="EMD-10668"/>
<dbReference type="EMDB" id="EMD-10674"/>
<dbReference type="EMDB" id="EMD-10690"/>
<dbReference type="EMDB" id="EMD-10709"/>
<dbReference type="EMDB" id="EMD-11098"/>
<dbReference type="EMDB" id="EMD-11099"/>
<dbReference type="EMDB" id="EMD-11100"/>
<dbReference type="EMDB" id="EMD-11288"/>
<dbReference type="EMDB" id="EMD-11289"/>
<dbReference type="EMDB" id="EMD-11292"/>
<dbReference type="EMDB" id="EMD-11299"/>
<dbReference type="EMDB" id="EMD-11934"/>
<dbReference type="EMDB" id="EMD-12189"/>
<dbReference type="EMDB" id="EMD-14694"/>
<dbReference type="EMDB" id="EMD-14720"/>
<dbReference type="EMDB" id="EMD-14721"/>
<dbReference type="EMDB" id="EMD-14722"/>
<dbReference type="EMDB" id="EMD-15103"/>
<dbReference type="EMDB" id="EMD-16880"/>
<dbReference type="EMDB" id="EMD-16902"/>
<dbReference type="EMDB" id="EMD-16905"/>
<dbReference type="EMDB" id="EMD-16908"/>
<dbReference type="EMDB" id="EMD-18382"/>
<dbReference type="EMDB" id="EMD-18539"/>
<dbReference type="EMDB" id="EMD-18765"/>
<dbReference type="EMDB" id="EMD-18793"/>
<dbReference type="EMDB" id="EMD-22693"/>
<dbReference type="EMDB" id="EMD-29757"/>
<dbReference type="EMDB" id="EMD-29759"/>
<dbReference type="EMDB" id="EMD-29760"/>
<dbReference type="EMDB" id="EMD-29771"/>
<dbReference type="EMDB" id="EMD-31465"/>
<dbReference type="EMDB" id="EMD-33298"/>
<dbReference type="EMDB" id="EMD-33329"/>
<dbReference type="EMDB" id="EMD-33330"/>
<dbReference type="EMDB" id="EMD-35413"/>
<dbReference type="EMDB" id="EMD-35414"/>
<dbReference type="EMDB" id="EMD-36178"/>
<dbReference type="EMDB" id="EMD-36179"/>
<dbReference type="EMDB" id="EMD-36180"/>
<dbReference type="EMDB" id="EMD-36181"/>
<dbReference type="EMDB" id="EMD-36838"/>
<dbReference type="EMDB" id="EMD-38629"/>
<dbReference type="EMDB" id="EMD-38630"/>
<dbReference type="EMDB" id="EMD-38631"/>
<dbReference type="EMDB" id="EMD-3883"/>
<dbReference type="EMDB" id="EMD-39455"/>
<dbReference type="EMDB" id="EMD-39456"/>
<dbReference type="EMDB" id="EMD-4070"/>
<dbReference type="EMDB" id="EMD-42351"/>
<dbReference type="EMDB" id="EMD-45170"/>
<dbReference type="EMDB" id="EMD-46644"/>
<dbReference type="EMDB" id="EMD-46732"/>
<dbReference type="EMDB" id="EMD-51132"/>
<dbReference type="EMDB" id="EMD-51452"/>
<dbReference type="EMDB" id="EMD-9701"/>
<dbReference type="EMDB" id="EMD-9702"/>
<dbReference type="EMDB" id="EMD-9703"/>
<dbReference type="SMR" id="P62987"/>
<dbReference type="BioGRID" id="113159">
    <property type="interactions" value="432"/>
</dbReference>
<dbReference type="ComplexPortal" id="CPX-5183">
    <property type="entry name" value="60S cytosolic large ribosomal subunit"/>
</dbReference>
<dbReference type="ComplexPortal" id="CPX-7664">
    <property type="entry name" value="60S cytosolic large ribosomal subunit, testis-specific variant"/>
</dbReference>
<dbReference type="ComplexPortal" id="CPX-7665">
    <property type="entry name" value="60S cytosolic large ribosomal subunit, striated muscle variant"/>
</dbReference>
<dbReference type="CORUM" id="P62987"/>
<dbReference type="FunCoup" id="P62987">
    <property type="interactions" value="2882"/>
</dbReference>
<dbReference type="IntAct" id="P62987">
    <property type="interactions" value="151"/>
</dbReference>
<dbReference type="MINT" id="P62987"/>
<dbReference type="STRING" id="9606.ENSP00000388107"/>
<dbReference type="ChEMBL" id="CHEMBL4523259"/>
<dbReference type="GlyGen" id="P62987">
    <property type="glycosylation" value="1 site, 1 O-linked glycan (1 site)"/>
</dbReference>
<dbReference type="iPTMnet" id="P62987"/>
<dbReference type="PhosphoSitePlus" id="P62987"/>
<dbReference type="SwissPalm" id="P62987"/>
<dbReference type="BioMuta" id="UBA52"/>
<dbReference type="DMDM" id="302393718"/>
<dbReference type="jPOST" id="P62987"/>
<dbReference type="MassIVE" id="P62987"/>
<dbReference type="PaxDb" id="9606-ENSP00000388107"/>
<dbReference type="PeptideAtlas" id="P62987"/>
<dbReference type="ProteomicsDB" id="57461"/>
<dbReference type="Pumba" id="P62987"/>
<dbReference type="TopDownProteomics" id="P62987"/>
<dbReference type="ABCD" id="P62987">
    <property type="antibodies" value="3 sequenced antibodies"/>
</dbReference>
<dbReference type="Antibodypedia" id="28101">
    <property type="antibodies" value="416 antibodies from 33 providers"/>
</dbReference>
<dbReference type="DNASU" id="7311"/>
<dbReference type="Ensembl" id="ENST00000430157.6">
    <property type="protein sequence ID" value="ENSP00000396910.1"/>
    <property type="gene ID" value="ENSG00000221983.8"/>
</dbReference>
<dbReference type="Ensembl" id="ENST00000442744.7">
    <property type="protein sequence ID" value="ENSP00000388107.1"/>
    <property type="gene ID" value="ENSG00000221983.8"/>
</dbReference>
<dbReference type="Ensembl" id="ENST00000595158.5">
    <property type="protein sequence ID" value="ENSP00000471622.1"/>
    <property type="gene ID" value="ENSG00000221983.8"/>
</dbReference>
<dbReference type="Ensembl" id="ENST00000595683.5">
    <property type="protein sequence ID" value="ENSP00000470419.1"/>
    <property type="gene ID" value="ENSG00000221983.8"/>
</dbReference>
<dbReference type="Ensembl" id="ENST00000596273.5">
    <property type="protein sequence ID" value="ENSP00000471062.1"/>
    <property type="gene ID" value="ENSG00000221983.8"/>
</dbReference>
<dbReference type="Ensembl" id="ENST00000596304.5">
    <property type="protein sequence ID" value="ENSP00000472264.1"/>
    <property type="gene ID" value="ENSG00000221983.8"/>
</dbReference>
<dbReference type="Ensembl" id="ENST00000597451.5">
    <property type="protein sequence ID" value="ENSP00000473048.1"/>
    <property type="gene ID" value="ENSG00000221983.8"/>
</dbReference>
<dbReference type="Ensembl" id="ENST00000598780.5">
    <property type="protein sequence ID" value="ENSP00000472545.1"/>
    <property type="gene ID" value="ENSG00000221983.8"/>
</dbReference>
<dbReference type="Ensembl" id="ENST00000599551.5">
    <property type="protein sequence ID" value="ENSP00000470507.1"/>
    <property type="gene ID" value="ENSG00000221983.8"/>
</dbReference>
<dbReference type="Ensembl" id="ENST00000599595.5">
    <property type="protein sequence ID" value="ENSP00000471464.1"/>
    <property type="gene ID" value="ENSG00000221983.8"/>
</dbReference>
<dbReference type="GeneID" id="7311"/>
<dbReference type="KEGG" id="hsa:7311"/>
<dbReference type="MANE-Select" id="ENST00000442744.7">
    <property type="protein sequence ID" value="ENSP00000388107.1"/>
    <property type="RefSeq nucleotide sequence ID" value="NM_001033930.3"/>
    <property type="RefSeq protein sequence ID" value="NP_001029102.1"/>
</dbReference>
<dbReference type="AGR" id="HGNC:12458"/>
<dbReference type="CTD" id="7311"/>
<dbReference type="DisGeNET" id="7311"/>
<dbReference type="GeneCards" id="UBA52"/>
<dbReference type="HGNC" id="HGNC:12458">
    <property type="gene designation" value="UBA52"/>
</dbReference>
<dbReference type="HPA" id="ENSG00000221983">
    <property type="expression patterns" value="Low tissue specificity"/>
</dbReference>
<dbReference type="MIM" id="191321">
    <property type="type" value="gene"/>
</dbReference>
<dbReference type="neXtProt" id="NX_P62987"/>
<dbReference type="OpenTargets" id="ENSG00000221983"/>
<dbReference type="VEuPathDB" id="HostDB:ENSG00000221983"/>
<dbReference type="eggNOG" id="KOG0003">
    <property type="taxonomic scope" value="Eukaryota"/>
</dbReference>
<dbReference type="GeneTree" id="ENSGT00940000153593"/>
<dbReference type="HOGENOM" id="CLU_010412_3_4_1"/>
<dbReference type="InParanoid" id="P62987"/>
<dbReference type="OMA" id="CGRCSQL"/>
<dbReference type="OrthoDB" id="428577at2759"/>
<dbReference type="PAN-GO" id="P62987">
    <property type="GO annotations" value="8 GO annotations based on evolutionary models"/>
</dbReference>
<dbReference type="PhylomeDB" id="P62987"/>
<dbReference type="TreeFam" id="TF352129"/>
<dbReference type="BioCyc" id="MetaCyc:G66-32465-MONOMER"/>
<dbReference type="PathwayCommons" id="P62987"/>
<dbReference type="Reactome" id="R-HSA-110312">
    <property type="pathway name" value="Translesion synthesis by REV1"/>
</dbReference>
<dbReference type="Reactome" id="R-HSA-110314">
    <property type="pathway name" value="Recognition of DNA damage by PCNA-containing replication complex"/>
</dbReference>
<dbReference type="Reactome" id="R-HSA-110320">
    <property type="pathway name" value="Translesion Synthesis by POLH"/>
</dbReference>
<dbReference type="Reactome" id="R-HSA-1169091">
    <property type="pathway name" value="Activation of NF-kappaB in B cells"/>
</dbReference>
<dbReference type="Reactome" id="R-HSA-1169408">
    <property type="pathway name" value="ISG15 antiviral mechanism"/>
</dbReference>
<dbReference type="Reactome" id="R-HSA-1234176">
    <property type="pathway name" value="Oxygen-dependent proline hydroxylation of Hypoxia-inducible Factor Alpha"/>
</dbReference>
<dbReference type="Reactome" id="R-HSA-1236382">
    <property type="pathway name" value="Constitutive Signaling by Ligand-Responsive EGFR Cancer Variants"/>
</dbReference>
<dbReference type="Reactome" id="R-HSA-1236974">
    <property type="pathway name" value="ER-Phagosome pathway"/>
</dbReference>
<dbReference type="Reactome" id="R-HSA-1253288">
    <property type="pathway name" value="Downregulation of ERBB4 signaling"/>
</dbReference>
<dbReference type="Reactome" id="R-HSA-1295596">
    <property type="pathway name" value="Spry regulation of FGF signaling"/>
</dbReference>
<dbReference type="Reactome" id="R-HSA-1358803">
    <property type="pathway name" value="Downregulation of ERBB2:ERBB3 signaling"/>
</dbReference>
<dbReference type="Reactome" id="R-HSA-156827">
    <property type="pathway name" value="L13a-mediated translational silencing of Ceruloplasmin expression"/>
</dbReference>
<dbReference type="Reactome" id="R-HSA-156902">
    <property type="pathway name" value="Peptide chain elongation"/>
</dbReference>
<dbReference type="Reactome" id="R-HSA-162588">
    <property type="pathway name" value="Budding and maturation of HIV virion"/>
</dbReference>
<dbReference type="Reactome" id="R-HSA-168638">
    <property type="pathway name" value="NOD1/2 Signaling Pathway"/>
</dbReference>
<dbReference type="Reactome" id="R-HSA-168927">
    <property type="pathway name" value="TICAM1, RIP1-mediated IKK complex recruitment"/>
</dbReference>
<dbReference type="Reactome" id="R-HSA-168928">
    <property type="pathway name" value="DDX58/IFIH1-mediated induction of interferon-alpha/beta"/>
</dbReference>
<dbReference type="Reactome" id="R-HSA-174048">
    <property type="pathway name" value="APC/C:Cdc20 mediated degradation of Cyclin B"/>
</dbReference>
<dbReference type="Reactome" id="R-HSA-174084">
    <property type="pathway name" value="Autodegradation of Cdh1 by Cdh1:APC/C"/>
</dbReference>
<dbReference type="Reactome" id="R-HSA-174113">
    <property type="pathway name" value="SCF-beta-TrCP mediated degradation of Emi1"/>
</dbReference>
<dbReference type="Reactome" id="R-HSA-174154">
    <property type="pathway name" value="APC/C:Cdc20 mediated degradation of Securin"/>
</dbReference>
<dbReference type="Reactome" id="R-HSA-174178">
    <property type="pathway name" value="APC/C:Cdh1 mediated degradation of Cdc20 and other APC/C:Cdh1 targeted proteins in late mitosis/early G1"/>
</dbReference>
<dbReference type="Reactome" id="R-HSA-174184">
    <property type="pathway name" value="Cdc20:Phospho-APC/C mediated degradation of Cyclin A"/>
</dbReference>
<dbReference type="Reactome" id="R-HSA-174490">
    <property type="pathway name" value="Membrane binding and targetting of GAG proteins"/>
</dbReference>
<dbReference type="Reactome" id="R-HSA-175474">
    <property type="pathway name" value="Assembly Of The HIV Virion"/>
</dbReference>
<dbReference type="Reactome" id="R-HSA-179409">
    <property type="pathway name" value="APC-Cdc20 mediated degradation of Nek2A"/>
</dbReference>
<dbReference type="Reactome" id="R-HSA-1799339">
    <property type="pathway name" value="SRP-dependent cotranslational protein targeting to membrane"/>
</dbReference>
<dbReference type="Reactome" id="R-HSA-180534">
    <property type="pathway name" value="Vpu mediated degradation of CD4"/>
</dbReference>
<dbReference type="Reactome" id="R-HSA-180585">
    <property type="pathway name" value="Vif-mediated degradation of APOBEC3G"/>
</dbReference>
<dbReference type="Reactome" id="R-HSA-182971">
    <property type="pathway name" value="EGFR downregulation"/>
</dbReference>
<dbReference type="Reactome" id="R-HSA-187577">
    <property type="pathway name" value="SCF(Skp2)-mediated degradation of p27/p21"/>
</dbReference>
<dbReference type="Reactome" id="R-HSA-192823">
    <property type="pathway name" value="Viral mRNA Translation"/>
</dbReference>
<dbReference type="Reactome" id="R-HSA-195253">
    <property type="pathway name" value="Degradation of beta-catenin by the destruction complex"/>
</dbReference>
<dbReference type="Reactome" id="R-HSA-201681">
    <property type="pathway name" value="TCF dependent signaling in response to WNT"/>
</dbReference>
<dbReference type="Reactome" id="R-HSA-202424">
    <property type="pathway name" value="Downstream TCR signaling"/>
</dbReference>
<dbReference type="Reactome" id="R-HSA-205043">
    <property type="pathway name" value="NRIF signals cell death from the nucleus"/>
</dbReference>
<dbReference type="Reactome" id="R-HSA-209543">
    <property type="pathway name" value="p75NTR recruits signalling complexes"/>
</dbReference>
<dbReference type="Reactome" id="R-HSA-209560">
    <property type="pathway name" value="NF-kB is activated and signals survival"/>
</dbReference>
<dbReference type="Reactome" id="R-HSA-211733">
    <property type="pathway name" value="Regulation of activated PAK-2p34 by proteasome mediated degradation"/>
</dbReference>
<dbReference type="Reactome" id="R-HSA-2122947">
    <property type="pathway name" value="NOTCH1 Intracellular Domain Regulates Transcription"/>
</dbReference>
<dbReference type="Reactome" id="R-HSA-2122948">
    <property type="pathway name" value="Activated NOTCH1 Transmits Signal to the Nucleus"/>
</dbReference>
<dbReference type="Reactome" id="R-HSA-2173788">
    <property type="pathway name" value="Downregulation of TGF-beta receptor signaling"/>
</dbReference>
<dbReference type="Reactome" id="R-HSA-2173791">
    <property type="pathway name" value="TGF-beta receptor signaling in EMT (epithelial to mesenchymal transition)"/>
</dbReference>
<dbReference type="Reactome" id="R-HSA-2173795">
    <property type="pathway name" value="Downregulation of SMAD2/3:SMAD4 transcriptional activity"/>
</dbReference>
<dbReference type="Reactome" id="R-HSA-2173796">
    <property type="pathway name" value="SMAD2/SMAD3:SMAD4 heterotrimer regulates transcription"/>
</dbReference>
<dbReference type="Reactome" id="R-HSA-2408557">
    <property type="pathway name" value="Selenocysteine synthesis"/>
</dbReference>
<dbReference type="Reactome" id="R-HSA-2467813">
    <property type="pathway name" value="Separation of Sister Chromatids"/>
</dbReference>
<dbReference type="Reactome" id="R-HSA-2559580">
    <property type="pathway name" value="Oxidative Stress Induced Senescence"/>
</dbReference>
<dbReference type="Reactome" id="R-HSA-2559582">
    <property type="pathway name" value="Senescence-Associated Secretory Phenotype (SASP)"/>
</dbReference>
<dbReference type="Reactome" id="R-HSA-2559585">
    <property type="pathway name" value="Oncogene Induced Senescence"/>
</dbReference>
<dbReference type="Reactome" id="R-HSA-2565942">
    <property type="pathway name" value="Regulation of PLK1 Activity at G2/M Transition"/>
</dbReference>
<dbReference type="Reactome" id="R-HSA-2644606">
    <property type="pathway name" value="Constitutive Signaling by NOTCH1 PEST Domain Mutants"/>
</dbReference>
<dbReference type="Reactome" id="R-HSA-2672351">
    <property type="pathway name" value="Stimuli-sensing channels"/>
</dbReference>
<dbReference type="Reactome" id="R-HSA-2691232">
    <property type="pathway name" value="Constitutive Signaling by NOTCH1 HD Domain Mutants"/>
</dbReference>
<dbReference type="Reactome" id="R-HSA-2871837">
    <property type="pathway name" value="FCERI mediated NF-kB activation"/>
</dbReference>
<dbReference type="Reactome" id="R-HSA-2894862">
    <property type="pathway name" value="Constitutive Signaling by NOTCH1 HD+PEST Domain Mutants"/>
</dbReference>
<dbReference type="Reactome" id="R-HSA-2979096">
    <property type="pathway name" value="NOTCH2 Activation and Transmission of Signal to the Nucleus"/>
</dbReference>
<dbReference type="Reactome" id="R-HSA-3134975">
    <property type="pathway name" value="Regulation of innate immune responses to cytosolic DNA"/>
</dbReference>
<dbReference type="Reactome" id="R-HSA-3322077">
    <property type="pathway name" value="Glycogen synthesis"/>
</dbReference>
<dbReference type="Reactome" id="R-HSA-349425">
    <property type="pathway name" value="Autodegradation of the E3 ubiquitin ligase COP1"/>
</dbReference>
<dbReference type="Reactome" id="R-HSA-3769402">
    <property type="pathway name" value="Deactivation of the beta-catenin transactivating complex"/>
</dbReference>
<dbReference type="Reactome" id="R-HSA-3785653">
    <property type="pathway name" value="Myoclonic epilepsy of Lafora"/>
</dbReference>
<dbReference type="Reactome" id="R-HSA-382556">
    <property type="pathway name" value="ABC-family proteins mediated transport"/>
</dbReference>
<dbReference type="Reactome" id="R-HSA-400253">
    <property type="pathway name" value="Circadian Clock"/>
</dbReference>
<dbReference type="Reactome" id="R-HSA-445989">
    <property type="pathway name" value="TAK1-dependent IKK and NF-kappa-B activation"/>
</dbReference>
<dbReference type="Reactome" id="R-HSA-450302">
    <property type="pathway name" value="activated TAK1 mediates p38 MAPK activation"/>
</dbReference>
<dbReference type="Reactome" id="R-HSA-450321">
    <property type="pathway name" value="JNK (c-Jun kinases) phosphorylation and activation mediated by activated human TAK1"/>
</dbReference>
<dbReference type="Reactome" id="R-HSA-450408">
    <property type="pathway name" value="AUF1 (hnRNP D0) binds and destabilizes mRNA"/>
</dbReference>
<dbReference type="Reactome" id="R-HSA-4608870">
    <property type="pathway name" value="Asymmetric localization of PCP proteins"/>
</dbReference>
<dbReference type="Reactome" id="R-HSA-4641257">
    <property type="pathway name" value="Degradation of AXIN"/>
</dbReference>
<dbReference type="Reactome" id="R-HSA-4641258">
    <property type="pathway name" value="Degradation of DVL"/>
</dbReference>
<dbReference type="Reactome" id="R-HSA-4641263">
    <property type="pathway name" value="Regulation of FZD by ubiquitination"/>
</dbReference>
<dbReference type="Reactome" id="R-HSA-5205685">
    <property type="pathway name" value="PINK1-PRKN Mediated Mitophagy"/>
</dbReference>
<dbReference type="Reactome" id="R-HSA-532668">
    <property type="pathway name" value="N-glycan trimming in the ER and Calnexin/Calreticulin cycle"/>
</dbReference>
<dbReference type="Reactome" id="R-HSA-5357905">
    <property type="pathway name" value="Regulation of TNFR1 signaling"/>
</dbReference>
<dbReference type="Reactome" id="R-HSA-5357956">
    <property type="pathway name" value="TNFR1-induced NF-kappa-B signaling pathway"/>
</dbReference>
<dbReference type="Reactome" id="R-HSA-5358346">
    <property type="pathway name" value="Hedgehog ligand biogenesis"/>
</dbReference>
<dbReference type="Reactome" id="R-HSA-5362768">
    <property type="pathway name" value="Hh mutants are degraded by ERAD"/>
</dbReference>
<dbReference type="Reactome" id="R-HSA-5607761">
    <property type="pathway name" value="Dectin-1 mediated noncanonical NF-kB signaling"/>
</dbReference>
<dbReference type="Reactome" id="R-HSA-5607764">
    <property type="pathway name" value="CLEC7A (Dectin-1) signaling"/>
</dbReference>
<dbReference type="Reactome" id="R-HSA-5610780">
    <property type="pathway name" value="Degradation of GLI1 by the proteasome"/>
</dbReference>
<dbReference type="Reactome" id="R-HSA-5610783">
    <property type="pathway name" value="Degradation of GLI2 by the proteasome"/>
</dbReference>
<dbReference type="Reactome" id="R-HSA-5610785">
    <property type="pathway name" value="GLI3 is processed to GLI3R by the proteasome"/>
</dbReference>
<dbReference type="Reactome" id="R-HSA-5632684">
    <property type="pathway name" value="Hedgehog 'on' state"/>
</dbReference>
<dbReference type="Reactome" id="R-HSA-5654726">
    <property type="pathway name" value="Negative regulation of FGFR1 signaling"/>
</dbReference>
<dbReference type="Reactome" id="R-HSA-5654727">
    <property type="pathway name" value="Negative regulation of FGFR2 signaling"/>
</dbReference>
<dbReference type="Reactome" id="R-HSA-5654732">
    <property type="pathway name" value="Negative regulation of FGFR3 signaling"/>
</dbReference>
<dbReference type="Reactome" id="R-HSA-5654733">
    <property type="pathway name" value="Negative regulation of FGFR4 signaling"/>
</dbReference>
<dbReference type="Reactome" id="R-HSA-5655862">
    <property type="pathway name" value="Translesion synthesis by POLK"/>
</dbReference>
<dbReference type="Reactome" id="R-HSA-5656121">
    <property type="pathway name" value="Translesion synthesis by POLI"/>
</dbReference>
<dbReference type="Reactome" id="R-HSA-5656169">
    <property type="pathway name" value="Termination of translesion DNA synthesis"/>
</dbReference>
<dbReference type="Reactome" id="R-HSA-5658442">
    <property type="pathway name" value="Regulation of RAS by GAPs"/>
</dbReference>
<dbReference type="Reactome" id="R-HSA-5668541">
    <property type="pathway name" value="TNFR2 non-canonical NF-kB pathway"/>
</dbReference>
<dbReference type="Reactome" id="R-HSA-5675221">
    <property type="pathway name" value="Negative regulation of MAPK pathway"/>
</dbReference>
<dbReference type="Reactome" id="R-HSA-5675482">
    <property type="pathway name" value="Regulation of necroptotic cell death"/>
</dbReference>
<dbReference type="Reactome" id="R-HSA-5676590">
    <property type="pathway name" value="NIK--&gt;noncanonical NF-kB signaling"/>
</dbReference>
<dbReference type="Reactome" id="R-HSA-5678895">
    <property type="pathway name" value="Defective CFTR causes cystic fibrosis"/>
</dbReference>
<dbReference type="Reactome" id="R-HSA-5684264">
    <property type="pathway name" value="MAP3K8 (TPL2)-dependent MAPK1/3 activation"/>
</dbReference>
<dbReference type="Reactome" id="R-HSA-5685942">
    <property type="pathway name" value="HDR through Homologous Recombination (HRR)"/>
</dbReference>
<dbReference type="Reactome" id="R-HSA-5687128">
    <property type="pathway name" value="MAPK6/MAPK4 signaling"/>
</dbReference>
<dbReference type="Reactome" id="R-HSA-5689603">
    <property type="pathway name" value="UCH proteinases"/>
</dbReference>
<dbReference type="Reactome" id="R-HSA-5689877">
    <property type="pathway name" value="Josephin domain DUBs"/>
</dbReference>
<dbReference type="Reactome" id="R-HSA-5689880">
    <property type="pathway name" value="Ub-specific processing proteases"/>
</dbReference>
<dbReference type="Reactome" id="R-HSA-5689896">
    <property type="pathway name" value="Ovarian tumor domain proteases"/>
</dbReference>
<dbReference type="Reactome" id="R-HSA-5689901">
    <property type="pathway name" value="Metalloprotease DUBs"/>
</dbReference>
<dbReference type="Reactome" id="R-HSA-5693565">
    <property type="pathway name" value="Recruitment and ATM-mediated phosphorylation of repair and signaling proteins at DNA double strand breaks"/>
</dbReference>
<dbReference type="Reactome" id="R-HSA-5693607">
    <property type="pathway name" value="Processing of DNA double-strand break ends"/>
</dbReference>
<dbReference type="Reactome" id="R-HSA-5696394">
    <property type="pathway name" value="DNA Damage Recognition in GG-NER"/>
</dbReference>
<dbReference type="Reactome" id="R-HSA-5696395">
    <property type="pathway name" value="Formation of Incision Complex in GG-NER"/>
</dbReference>
<dbReference type="Reactome" id="R-HSA-5696397">
    <property type="pathway name" value="Gap-filling DNA repair synthesis and ligation in GG-NER"/>
</dbReference>
<dbReference type="Reactome" id="R-HSA-5696400">
    <property type="pathway name" value="Dual Incision in GG-NER"/>
</dbReference>
<dbReference type="Reactome" id="R-HSA-6781823">
    <property type="pathway name" value="Formation of TC-NER Pre-Incision Complex"/>
</dbReference>
<dbReference type="Reactome" id="R-HSA-6781827">
    <property type="pathway name" value="Transcription-Coupled Nucleotide Excision Repair (TC-NER)"/>
</dbReference>
<dbReference type="Reactome" id="R-HSA-6782135">
    <property type="pathway name" value="Dual incision in TC-NER"/>
</dbReference>
<dbReference type="Reactome" id="R-HSA-6782210">
    <property type="pathway name" value="Gap-filling DNA repair synthesis and ligation in TC-NER"/>
</dbReference>
<dbReference type="Reactome" id="R-HSA-6783310">
    <property type="pathway name" value="Fanconi Anemia Pathway"/>
</dbReference>
<dbReference type="Reactome" id="R-HSA-6791226">
    <property type="pathway name" value="Major pathway of rRNA processing in the nucleolus and cytosol"/>
</dbReference>
<dbReference type="Reactome" id="R-HSA-6804756">
    <property type="pathway name" value="Regulation of TP53 Activity through Phosphorylation"/>
</dbReference>
<dbReference type="Reactome" id="R-HSA-6804757">
    <property type="pathway name" value="Regulation of TP53 Degradation"/>
</dbReference>
<dbReference type="Reactome" id="R-HSA-6804760">
    <property type="pathway name" value="Regulation of TP53 Activity through Methylation"/>
</dbReference>
<dbReference type="Reactome" id="R-HSA-6807004">
    <property type="pathway name" value="Negative regulation of MET activity"/>
</dbReference>
<dbReference type="Reactome" id="R-HSA-68867">
    <property type="pathway name" value="Assembly of the pre-replicative complex"/>
</dbReference>
<dbReference type="Reactome" id="R-HSA-68949">
    <property type="pathway name" value="Orc1 removal from chromatin"/>
</dbReference>
<dbReference type="Reactome" id="R-HSA-69017">
    <property type="pathway name" value="CDK-mediated phosphorylation and removal of Cdc6"/>
</dbReference>
<dbReference type="Reactome" id="R-HSA-69231">
    <property type="pathway name" value="Cyclin D associated events in G1"/>
</dbReference>
<dbReference type="Reactome" id="R-HSA-69481">
    <property type="pathway name" value="G2/M Checkpoints"/>
</dbReference>
<dbReference type="Reactome" id="R-HSA-69541">
    <property type="pathway name" value="Stabilization of p53"/>
</dbReference>
<dbReference type="Reactome" id="R-HSA-69601">
    <property type="pathway name" value="Ubiquitin Mediated Degradation of Phosphorylated Cdc25A"/>
</dbReference>
<dbReference type="Reactome" id="R-HSA-72689">
    <property type="pathway name" value="Formation of a pool of free 40S subunits"/>
</dbReference>
<dbReference type="Reactome" id="R-HSA-72706">
    <property type="pathway name" value="GTP hydrolysis and joining of the 60S ribosomal subunit"/>
</dbReference>
<dbReference type="Reactome" id="R-HSA-72764">
    <property type="pathway name" value="Eukaryotic Translation Termination"/>
</dbReference>
<dbReference type="Reactome" id="R-HSA-75815">
    <property type="pathway name" value="Ubiquitin-dependent degradation of Cyclin D"/>
</dbReference>
<dbReference type="Reactome" id="R-HSA-8849469">
    <property type="pathway name" value="PTK6 Regulates RTKs and Their Effectors AKT1 and DOK1"/>
</dbReference>
<dbReference type="Reactome" id="R-HSA-8852276">
    <property type="pathway name" value="The role of GTSE1 in G2/M progression after G2 checkpoint"/>
</dbReference>
<dbReference type="Reactome" id="R-HSA-8854050">
    <property type="pathway name" value="FBXL7 down-regulates AURKA during mitotic entry and in early mitosis"/>
</dbReference>
<dbReference type="Reactome" id="R-HSA-8856825">
    <property type="pathway name" value="Cargo recognition for clathrin-mediated endocytosis"/>
</dbReference>
<dbReference type="Reactome" id="R-HSA-8856828">
    <property type="pathway name" value="Clathrin-mediated endocytosis"/>
</dbReference>
<dbReference type="Reactome" id="R-HSA-8863795">
    <property type="pathway name" value="Downregulation of ERBB2 signaling"/>
</dbReference>
<dbReference type="Reactome" id="R-HSA-8866427">
    <property type="pathway name" value="VLDLR internalisation and degradation"/>
</dbReference>
<dbReference type="Reactome" id="R-HSA-8866652">
    <property type="pathway name" value="Synthesis of active ubiquitin: roles of E1 and E2 enzymes"/>
</dbReference>
<dbReference type="Reactome" id="R-HSA-8866654">
    <property type="pathway name" value="E3 ubiquitin ligases ubiquitinate target proteins"/>
</dbReference>
<dbReference type="Reactome" id="R-HSA-8875360">
    <property type="pathway name" value="InlB-mediated entry of Listeria monocytogenes into host cell"/>
</dbReference>
<dbReference type="Reactome" id="R-HSA-8876493">
    <property type="pathway name" value="InlA-mediated entry of Listeria monocytogenes into host cells"/>
</dbReference>
<dbReference type="Reactome" id="R-HSA-8939236">
    <property type="pathway name" value="RUNX1 regulates transcription of genes involved in differentiation of HSCs"/>
</dbReference>
<dbReference type="Reactome" id="R-HSA-8939902">
    <property type="pathway name" value="Regulation of RUNX2 expression and activity"/>
</dbReference>
<dbReference type="Reactome" id="R-HSA-8941858">
    <property type="pathway name" value="Regulation of RUNX3 expression and activity"/>
</dbReference>
<dbReference type="Reactome" id="R-HSA-8948747">
    <property type="pathway name" value="Regulation of PTEN localization"/>
</dbReference>
<dbReference type="Reactome" id="R-HSA-8948751">
    <property type="pathway name" value="Regulation of PTEN stability and activity"/>
</dbReference>
<dbReference type="Reactome" id="R-HSA-8951664">
    <property type="pathway name" value="Neddylation"/>
</dbReference>
<dbReference type="Reactome" id="R-HSA-901032">
    <property type="pathway name" value="ER Quality Control Compartment (ERQC)"/>
</dbReference>
<dbReference type="Reactome" id="R-HSA-9010553">
    <property type="pathway name" value="Regulation of expression of SLITs and ROBOs"/>
</dbReference>
<dbReference type="Reactome" id="R-HSA-9013507">
    <property type="pathway name" value="NOTCH3 Activation and Transmission of Signal to the Nucleus"/>
</dbReference>
<dbReference type="Reactome" id="R-HSA-9013973">
    <property type="pathway name" value="TICAM1-dependent activation of IRF3/IRF7"/>
</dbReference>
<dbReference type="Reactome" id="R-HSA-9014325">
    <property type="pathway name" value="TICAM1,TRAF6-dependent induction of TAK1 complex"/>
</dbReference>
<dbReference type="Reactome" id="R-HSA-9020702">
    <property type="pathway name" value="Interleukin-1 signaling"/>
</dbReference>
<dbReference type="Reactome" id="R-HSA-9033241">
    <property type="pathway name" value="Peroxisomal protein import"/>
</dbReference>
<dbReference type="Reactome" id="R-HSA-909733">
    <property type="pathway name" value="Interferon alpha/beta signaling"/>
</dbReference>
<dbReference type="Reactome" id="R-HSA-912631">
    <property type="pathway name" value="Regulation of signaling by CBL"/>
</dbReference>
<dbReference type="Reactome" id="R-HSA-917729">
    <property type="pathway name" value="Endosomal Sorting Complex Required For Transport (ESCRT)"/>
</dbReference>
<dbReference type="Reactome" id="R-HSA-917937">
    <property type="pathway name" value="Iron uptake and transport"/>
</dbReference>
<dbReference type="Reactome" id="R-HSA-936440">
    <property type="pathway name" value="Negative regulators of DDX58/IFIH1 signaling"/>
</dbReference>
<dbReference type="Reactome" id="R-HSA-936964">
    <property type="pathway name" value="Activation of IRF3, IRF7 mediated by TBK1, IKKEpsilon (IKBKE)"/>
</dbReference>
<dbReference type="Reactome" id="R-HSA-937039">
    <property type="pathway name" value="IRAK1 recruits IKK complex"/>
</dbReference>
<dbReference type="Reactome" id="R-HSA-937041">
    <property type="pathway name" value="IKK complex recruitment mediated by RIP1"/>
</dbReference>
<dbReference type="Reactome" id="R-HSA-937042">
    <property type="pathway name" value="IRAK2 mediated activation of TAK1 complex"/>
</dbReference>
<dbReference type="Reactome" id="R-HSA-937072">
    <property type="pathway name" value="TRAF6-mediated induction of TAK1 complex within TLR4 complex"/>
</dbReference>
<dbReference type="Reactome" id="R-HSA-9604323">
    <property type="pathway name" value="Negative regulation of NOTCH4 signaling"/>
</dbReference>
<dbReference type="Reactome" id="R-HSA-9613829">
    <property type="pathway name" value="Chaperone Mediated Autophagy"/>
</dbReference>
<dbReference type="Reactome" id="R-HSA-9615710">
    <property type="pathway name" value="Late endosomal microautophagy"/>
</dbReference>
<dbReference type="Reactome" id="R-HSA-9633012">
    <property type="pathway name" value="Response of EIF2AK4 (GCN2) to amino acid deficiency"/>
</dbReference>
<dbReference type="Reactome" id="R-HSA-9636383">
    <property type="pathway name" value="Prevention of phagosomal-lysosomal fusion"/>
</dbReference>
<dbReference type="Reactome" id="R-HSA-9637628">
    <property type="pathway name" value="Modulation by Mtb of host immune system"/>
</dbReference>
<dbReference type="Reactome" id="R-HSA-9645460">
    <property type="pathway name" value="Alpha-protein kinase 1 signaling pathway"/>
</dbReference>
<dbReference type="Reactome" id="R-HSA-9646399">
    <property type="pathway name" value="Aggrephagy"/>
</dbReference>
<dbReference type="Reactome" id="R-HSA-9648002">
    <property type="pathway name" value="RAS processing"/>
</dbReference>
<dbReference type="Reactome" id="R-HSA-9664873">
    <property type="pathway name" value="Pexophagy"/>
</dbReference>
<dbReference type="Reactome" id="R-HSA-9680350">
    <property type="pathway name" value="Signaling by CSF1 (M-CSF) in myeloid cells"/>
</dbReference>
<dbReference type="Reactome" id="R-HSA-9683683">
    <property type="pathway name" value="Maturation of protein E"/>
</dbReference>
<dbReference type="Reactome" id="R-HSA-9692916">
    <property type="pathway name" value="SARS-CoV-1 activates/modulates innate immune responses"/>
</dbReference>
<dbReference type="Reactome" id="R-HSA-9694493">
    <property type="pathway name" value="Maturation of protein E"/>
</dbReference>
<dbReference type="Reactome" id="R-HSA-9705462">
    <property type="pathway name" value="Inactivation of CSF3 (G-CSF) signaling"/>
</dbReference>
<dbReference type="Reactome" id="R-HSA-9705671">
    <property type="pathway name" value="SARS-CoV-2 activates/modulates innate and adaptive immune responses"/>
</dbReference>
<dbReference type="Reactome" id="R-HSA-9706369">
    <property type="pathway name" value="Negative regulation of FLT3"/>
</dbReference>
<dbReference type="Reactome" id="R-HSA-9706377">
    <property type="pathway name" value="FLT3 signaling by CBL mutants"/>
</dbReference>
<dbReference type="Reactome" id="R-HSA-9708530">
    <property type="pathway name" value="Regulation of BACH1 activity"/>
</dbReference>
<dbReference type="Reactome" id="R-HSA-9725370">
    <property type="pathway name" value="Signaling by ALK fusions and activated point mutants"/>
</dbReference>
<dbReference type="Reactome" id="R-HSA-975110">
    <property type="pathway name" value="TRAF6 mediated IRF7 activation in TLR7/8 or 9 signaling"/>
</dbReference>
<dbReference type="Reactome" id="R-HSA-975144">
    <property type="pathway name" value="IRAK1 recruits IKK complex upon TLR7/8 or 9 stimulation"/>
</dbReference>
<dbReference type="Reactome" id="R-HSA-975163">
    <property type="pathway name" value="IRAK2 mediated activation of TAK1 complex upon TLR7/8 or 9 stimulation"/>
</dbReference>
<dbReference type="Reactome" id="R-HSA-9755511">
    <property type="pathway name" value="KEAP1-NFE2L2 pathway"/>
</dbReference>
<dbReference type="Reactome" id="R-HSA-9758274">
    <property type="pathway name" value="Regulation of NF-kappa B signaling"/>
</dbReference>
<dbReference type="Reactome" id="R-HSA-975956">
    <property type="pathway name" value="Nonsense Mediated Decay (NMD) independent of the Exon Junction Complex (EJC)"/>
</dbReference>
<dbReference type="Reactome" id="R-HSA-975957">
    <property type="pathway name" value="Nonsense Mediated Decay (NMD) enhanced by the Exon Junction Complex (EJC)"/>
</dbReference>
<dbReference type="Reactome" id="R-HSA-9762114">
    <property type="pathway name" value="GSK3B and BTRC:CUL1-mediated-degradation of NFE2L2"/>
</dbReference>
<dbReference type="Reactome" id="R-HSA-977225">
    <property type="pathway name" value="Amyloid fiber formation"/>
</dbReference>
<dbReference type="Reactome" id="R-HSA-9824878">
    <property type="pathway name" value="Regulation of TBK1, IKKEpsilon (IKBKE)-mediated activation of IRF3, IRF7"/>
</dbReference>
<dbReference type="Reactome" id="R-HSA-9828211">
    <property type="pathway name" value="Regulation of TBK1, IKKEpsilon-mediated activation of IRF3, IRF7 upon TLR3 ligation"/>
</dbReference>
<dbReference type="Reactome" id="R-HSA-983168">
    <property type="pathway name" value="Antigen processing: Ubiquitination &amp; Proteasome degradation"/>
</dbReference>
<dbReference type="Reactome" id="R-HSA-9833109">
    <property type="pathway name" value="Evasion by RSV of host interferon responses"/>
</dbReference>
<dbReference type="Reactome" id="R-HSA-9861718">
    <property type="pathway name" value="Regulation of pyruvate metabolism"/>
</dbReference>
<dbReference type="SignaLink" id="P62987"/>
<dbReference type="SIGNOR" id="P62987"/>
<dbReference type="BioGRID-ORCS" id="7311">
    <property type="hits" value="742 hits in 1100 CRISPR screens"/>
</dbReference>
<dbReference type="ChiTaRS" id="UBA52">
    <property type="organism name" value="human"/>
</dbReference>
<dbReference type="EvolutionaryTrace" id="P62987"/>
<dbReference type="GenomeRNAi" id="7311"/>
<dbReference type="Pharos" id="P62987">
    <property type="development level" value="Tbio"/>
</dbReference>
<dbReference type="PRO" id="PR:P62987"/>
<dbReference type="Proteomes" id="UP000005640">
    <property type="component" value="Chromosome 19"/>
</dbReference>
<dbReference type="RNAct" id="P62987">
    <property type="molecule type" value="protein"/>
</dbReference>
<dbReference type="Bgee" id="ENSG00000221983">
    <property type="expression patterns" value="Expressed in blood and 209 other cell types or tissues"/>
</dbReference>
<dbReference type="ExpressionAtlas" id="P62987">
    <property type="expression patterns" value="baseline and differential"/>
</dbReference>
<dbReference type="GO" id="GO:0005737">
    <property type="term" value="C:cytoplasm"/>
    <property type="evidence" value="ECO:0000318"/>
    <property type="project" value="GO_Central"/>
</dbReference>
<dbReference type="GO" id="GO:0005829">
    <property type="term" value="C:cytosol"/>
    <property type="evidence" value="ECO:0000304"/>
    <property type="project" value="Reactome"/>
</dbReference>
<dbReference type="GO" id="GO:0022625">
    <property type="term" value="C:cytosolic large ribosomal subunit"/>
    <property type="evidence" value="ECO:0000353"/>
    <property type="project" value="ComplexPortal"/>
</dbReference>
<dbReference type="GO" id="GO:0022626">
    <property type="term" value="C:cytosolic ribosome"/>
    <property type="evidence" value="ECO:0000314"/>
    <property type="project" value="FlyBase"/>
</dbReference>
<dbReference type="GO" id="GO:0030666">
    <property type="term" value="C:endocytic vesicle membrane"/>
    <property type="evidence" value="ECO:0000304"/>
    <property type="project" value="Reactome"/>
</dbReference>
<dbReference type="GO" id="GO:0005789">
    <property type="term" value="C:endoplasmic reticulum membrane"/>
    <property type="evidence" value="ECO:0000304"/>
    <property type="project" value="Reactome"/>
</dbReference>
<dbReference type="GO" id="GO:0010008">
    <property type="term" value="C:endosome membrane"/>
    <property type="evidence" value="ECO:0000304"/>
    <property type="project" value="Reactome"/>
</dbReference>
<dbReference type="GO" id="GO:0070062">
    <property type="term" value="C:extracellular exosome"/>
    <property type="evidence" value="ECO:0007005"/>
    <property type="project" value="UniProtKB"/>
</dbReference>
<dbReference type="GO" id="GO:0005615">
    <property type="term" value="C:extracellular space"/>
    <property type="evidence" value="ECO:0007005"/>
    <property type="project" value="UniProtKB"/>
</dbReference>
<dbReference type="GO" id="GO:0005765">
    <property type="term" value="C:lysosomal membrane"/>
    <property type="evidence" value="ECO:0007005"/>
    <property type="project" value="UniProtKB"/>
</dbReference>
<dbReference type="GO" id="GO:0005741">
    <property type="term" value="C:mitochondrial outer membrane"/>
    <property type="evidence" value="ECO:0000304"/>
    <property type="project" value="Reactome"/>
</dbReference>
<dbReference type="GO" id="GO:0005654">
    <property type="term" value="C:nucleoplasm"/>
    <property type="evidence" value="ECO:0000304"/>
    <property type="project" value="Reactome"/>
</dbReference>
<dbReference type="GO" id="GO:0005634">
    <property type="term" value="C:nucleus"/>
    <property type="evidence" value="ECO:0007005"/>
    <property type="project" value="UniProtKB"/>
</dbReference>
<dbReference type="GO" id="GO:0005886">
    <property type="term" value="C:plasma membrane"/>
    <property type="evidence" value="ECO:0000304"/>
    <property type="project" value="Reactome"/>
</dbReference>
<dbReference type="GO" id="GO:0031982">
    <property type="term" value="C:vesicle"/>
    <property type="evidence" value="ECO:0007005"/>
    <property type="project" value="UniProtKB"/>
</dbReference>
<dbReference type="GO" id="GO:0031386">
    <property type="term" value="F:protein tag activity"/>
    <property type="evidence" value="ECO:0000318"/>
    <property type="project" value="GO_Central"/>
</dbReference>
<dbReference type="GO" id="GO:0003735">
    <property type="term" value="F:structural constituent of ribosome"/>
    <property type="evidence" value="ECO:0000314"/>
    <property type="project" value="FlyBase"/>
</dbReference>
<dbReference type="GO" id="GO:0031625">
    <property type="term" value="F:ubiquitin protein ligase binding"/>
    <property type="evidence" value="ECO:0000318"/>
    <property type="project" value="GO_Central"/>
</dbReference>
<dbReference type="GO" id="GO:0002181">
    <property type="term" value="P:cytoplasmic translation"/>
    <property type="evidence" value="ECO:0000314"/>
    <property type="project" value="UniProt"/>
</dbReference>
<dbReference type="GO" id="GO:0019941">
    <property type="term" value="P:modification-dependent protein catabolic process"/>
    <property type="evidence" value="ECO:0000318"/>
    <property type="project" value="GO_Central"/>
</dbReference>
<dbReference type="GO" id="GO:0036211">
    <property type="term" value="P:protein modification process"/>
    <property type="evidence" value="ECO:0000304"/>
    <property type="project" value="ProtInc"/>
</dbReference>
<dbReference type="GO" id="GO:0016567">
    <property type="term" value="P:protein ubiquitination"/>
    <property type="evidence" value="ECO:0000318"/>
    <property type="project" value="GO_Central"/>
</dbReference>
<dbReference type="GO" id="GO:0017085">
    <property type="term" value="P:response to insecticide"/>
    <property type="evidence" value="ECO:0007669"/>
    <property type="project" value="Ensembl"/>
</dbReference>
<dbReference type="CDD" id="cd01803">
    <property type="entry name" value="Ubl_ubiquitin"/>
    <property type="match status" value="1"/>
</dbReference>
<dbReference type="FunFam" id="3.10.20.90:FF:000014">
    <property type="entry name" value="Ubiquitin-60S ribosomal L40 fusion"/>
    <property type="match status" value="1"/>
</dbReference>
<dbReference type="FunFam" id="4.10.1060.50:FF:000001">
    <property type="entry name" value="ubiquitin-60S ribosomal protein L40"/>
    <property type="match status" value="1"/>
</dbReference>
<dbReference type="Gene3D" id="4.10.1060.50">
    <property type="match status" value="1"/>
</dbReference>
<dbReference type="Gene3D" id="3.10.20.90">
    <property type="entry name" value="Phosphatidylinositol 3-kinase Catalytic Subunit, Chain A, domain 1"/>
    <property type="match status" value="1"/>
</dbReference>
<dbReference type="InterPro" id="IPR001975">
    <property type="entry name" value="Ribosomal_eL40_dom"/>
</dbReference>
<dbReference type="InterPro" id="IPR038587">
    <property type="entry name" value="Ribosomal_eL40_sf"/>
</dbReference>
<dbReference type="InterPro" id="IPR000626">
    <property type="entry name" value="Ubiquitin-like_dom"/>
</dbReference>
<dbReference type="InterPro" id="IPR029071">
    <property type="entry name" value="Ubiquitin-like_domsf"/>
</dbReference>
<dbReference type="InterPro" id="IPR019954">
    <property type="entry name" value="Ubiquitin_CS"/>
</dbReference>
<dbReference type="InterPro" id="IPR019956">
    <property type="entry name" value="Ubiquitin_dom"/>
</dbReference>
<dbReference type="InterPro" id="IPR050158">
    <property type="entry name" value="Ubiquitin_ubiquitin-like"/>
</dbReference>
<dbReference type="PANTHER" id="PTHR10666">
    <property type="entry name" value="UBIQUITIN"/>
    <property type="match status" value="1"/>
</dbReference>
<dbReference type="Pfam" id="PF01020">
    <property type="entry name" value="Ribosomal_L40e"/>
    <property type="match status" value="1"/>
</dbReference>
<dbReference type="Pfam" id="PF00240">
    <property type="entry name" value="ubiquitin"/>
    <property type="match status" value="1"/>
</dbReference>
<dbReference type="PRINTS" id="PR00348">
    <property type="entry name" value="UBIQUITIN"/>
</dbReference>
<dbReference type="SMART" id="SM01377">
    <property type="entry name" value="Ribosomal_L40e"/>
    <property type="match status" value="1"/>
</dbReference>
<dbReference type="SMART" id="SM00213">
    <property type="entry name" value="UBQ"/>
    <property type="match status" value="1"/>
</dbReference>
<dbReference type="SUPFAM" id="SSF54236">
    <property type="entry name" value="Ubiquitin-like"/>
    <property type="match status" value="1"/>
</dbReference>
<dbReference type="PROSITE" id="PS00299">
    <property type="entry name" value="UBIQUITIN_1"/>
    <property type="match status" value="1"/>
</dbReference>
<dbReference type="PROSITE" id="PS50053">
    <property type="entry name" value="UBIQUITIN_2"/>
    <property type="match status" value="1"/>
</dbReference>
<proteinExistence type="evidence at protein level"/>
<evidence type="ECO:0000250" key="1"/>
<evidence type="ECO:0000255" key="2">
    <source>
        <dbReference type="PROSITE-ProRule" id="PRU00214"/>
    </source>
</evidence>
<evidence type="ECO:0000269" key="3">
    <source>
    </source>
</evidence>
<evidence type="ECO:0000269" key="4">
    <source>
    </source>
</evidence>
<evidence type="ECO:0000269" key="5">
    <source>
    </source>
</evidence>
<evidence type="ECO:0000269" key="6">
    <source>
    </source>
</evidence>
<evidence type="ECO:0000269" key="7">
    <source>
    </source>
</evidence>
<evidence type="ECO:0000269" key="8">
    <source>
    </source>
</evidence>
<evidence type="ECO:0000269" key="9">
    <source>
    </source>
</evidence>
<evidence type="ECO:0000269" key="10">
    <source>
    </source>
</evidence>
<evidence type="ECO:0000269" key="11">
    <source>
    </source>
</evidence>
<evidence type="ECO:0000269" key="12">
    <source>
    </source>
</evidence>
<evidence type="ECO:0000269" key="13">
    <source>
    </source>
</evidence>
<evidence type="ECO:0000269" key="14">
    <source>
    </source>
</evidence>
<evidence type="ECO:0000269" key="15">
    <source>
    </source>
</evidence>
<evidence type="ECO:0000269" key="16">
    <source>
    </source>
</evidence>
<evidence type="ECO:0000269" key="17">
    <source>
    </source>
</evidence>
<evidence type="ECO:0000269" key="18">
    <source>
    </source>
</evidence>
<evidence type="ECO:0000269" key="19">
    <source>
    </source>
</evidence>
<evidence type="ECO:0000269" key="20">
    <source>
    </source>
</evidence>
<evidence type="ECO:0000269" key="21">
    <source>
    </source>
</evidence>
<evidence type="ECO:0000303" key="22">
    <source>
    </source>
</evidence>
<evidence type="ECO:0000303" key="23">
    <source>
    </source>
</evidence>
<evidence type="ECO:0000303" key="24">
    <source>
    </source>
</evidence>
<evidence type="ECO:0000303" key="25">
    <source>
    </source>
</evidence>
<evidence type="ECO:0000305" key="26"/>
<evidence type="ECO:0000305" key="27">
    <source>
    </source>
</evidence>
<evidence type="ECO:0007744" key="28">
    <source>
        <dbReference type="PDB" id="4S1Z"/>
    </source>
</evidence>
<evidence type="ECO:0007744" key="29">
    <source>
        <dbReference type="PDB" id="6LQM"/>
    </source>
</evidence>
<evidence type="ECO:0007829" key="30">
    <source>
        <dbReference type="PDB" id="2MBH"/>
    </source>
</evidence>
<evidence type="ECO:0007829" key="31">
    <source>
        <dbReference type="PDB" id="4RF1"/>
    </source>
</evidence>
<evidence type="ECO:0007829" key="32">
    <source>
        <dbReference type="PDB" id="5GO7"/>
    </source>
</evidence>
<evidence type="ECO:0007829" key="33">
    <source>
        <dbReference type="PDB" id="5GOD"/>
    </source>
</evidence>
<evidence type="ECO:0007829" key="34">
    <source>
        <dbReference type="PDB" id="5GOG"/>
    </source>
</evidence>
<keyword id="KW-0002">3D-structure</keyword>
<keyword id="KW-0013">ADP-ribosylation</keyword>
<keyword id="KW-0963">Cytoplasm</keyword>
<keyword id="KW-0903">Direct protein sequencing</keyword>
<keyword id="KW-1017">Isopeptide bond</keyword>
<keyword id="KW-0488">Methylation</keyword>
<keyword id="KW-0539">Nucleus</keyword>
<keyword id="KW-0597">Phosphoprotein</keyword>
<keyword id="KW-1267">Proteomics identification</keyword>
<keyword id="KW-1185">Reference proteome</keyword>
<keyword id="KW-0687">Ribonucleoprotein</keyword>
<keyword id="KW-0689">Ribosomal protein</keyword>
<keyword id="KW-0832">Ubl conjugation</keyword>
<organism>
    <name type="scientific">Homo sapiens</name>
    <name type="common">Human</name>
    <dbReference type="NCBI Taxonomy" id="9606"/>
    <lineage>
        <taxon>Eukaryota</taxon>
        <taxon>Metazoa</taxon>
        <taxon>Chordata</taxon>
        <taxon>Craniata</taxon>
        <taxon>Vertebrata</taxon>
        <taxon>Euteleostomi</taxon>
        <taxon>Mammalia</taxon>
        <taxon>Eutheria</taxon>
        <taxon>Euarchontoglires</taxon>
        <taxon>Primates</taxon>
        <taxon>Haplorrhini</taxon>
        <taxon>Catarrhini</taxon>
        <taxon>Hominidae</taxon>
        <taxon>Homo</taxon>
    </lineage>
</organism>
<protein>
    <recommendedName>
        <fullName evidence="26">Ubiquitin-ribosomal protein eL40 fusion protein</fullName>
    </recommendedName>
    <alternativeName>
        <fullName>CEP52</fullName>
    </alternativeName>
    <alternativeName>
        <fullName>Ubiquitin A-52 residue ribosomal protein fusion product 1</fullName>
    </alternativeName>
    <component>
        <recommendedName>
            <fullName>Ubiquitin</fullName>
        </recommendedName>
    </component>
    <component>
        <recommendedName>
            <fullName evidence="23">Large ribosomal subunit protein eL40</fullName>
        </recommendedName>
        <alternativeName>
            <fullName>60S ribosomal protein L40</fullName>
            <shortName evidence="24 25">rpL40</shortName>
        </alternativeName>
    </component>
</protein>
<sequence length="128" mass="14728">MQIFVKTLTGKTITLEVEPSDTIENVKAKIQDKEGIPPDQQRLIFAGKQLEDGRTLSDYNIQKESTLHLVLRLRGGIIEPSLRQLAQKYNCDKMICRKCYARLHPRAVNCRKKKCGHTNNLRPKKKVK</sequence>
<gene>
    <name type="primary">UBA52</name>
    <name type="synonym">UBCEP2</name>
</gene>
<reference key="1">
    <citation type="journal article" date="1991" name="Nucleic Acids Res.">
        <title>The human ubiquitin-52 amino acid fusion protein gene shares several structural features with mammalian ribosomal protein genes.</title>
        <authorList>
            <person name="Baker R.T."/>
            <person name="Board P.G."/>
        </authorList>
    </citation>
    <scope>NUCLEOTIDE SEQUENCE [GENOMIC DNA / MRNA]</scope>
    <source>
        <tissue>Adrenal gland</tissue>
        <tissue>Lymphocyte</tissue>
        <tissue>Placenta</tissue>
    </source>
</reference>
<reference key="2">
    <citation type="submission" date="2001-02" db="EMBL/GenBank/DDBJ databases">
        <title>Human ubiquitin A-52 residue ribosomal protein fusion product 1 (UBA52) in salivary epithelial cells.</title>
        <authorList>
            <person name="Wang H."/>
            <person name="Zhang Y."/>
            <person name="Okamoto T."/>
        </authorList>
    </citation>
    <scope>NUCLEOTIDE SEQUENCE [MRNA]</scope>
</reference>
<reference key="3">
    <citation type="journal article" date="2004" name="Nature">
        <title>The DNA sequence and biology of human chromosome 19.</title>
        <authorList>
            <person name="Grimwood J."/>
            <person name="Gordon L.A."/>
            <person name="Olsen A.S."/>
            <person name="Terry A."/>
            <person name="Schmutz J."/>
            <person name="Lamerdin J.E."/>
            <person name="Hellsten U."/>
            <person name="Goodstein D."/>
            <person name="Couronne O."/>
            <person name="Tran-Gyamfi M."/>
            <person name="Aerts A."/>
            <person name="Altherr M."/>
            <person name="Ashworth L."/>
            <person name="Bajorek E."/>
            <person name="Black S."/>
            <person name="Branscomb E."/>
            <person name="Caenepeel S."/>
            <person name="Carrano A.V."/>
            <person name="Caoile C."/>
            <person name="Chan Y.M."/>
            <person name="Christensen M."/>
            <person name="Cleland C.A."/>
            <person name="Copeland A."/>
            <person name="Dalin E."/>
            <person name="Dehal P."/>
            <person name="Denys M."/>
            <person name="Detter J.C."/>
            <person name="Escobar J."/>
            <person name="Flowers D."/>
            <person name="Fotopulos D."/>
            <person name="Garcia C."/>
            <person name="Georgescu A.M."/>
            <person name="Glavina T."/>
            <person name="Gomez M."/>
            <person name="Gonzales E."/>
            <person name="Groza M."/>
            <person name="Hammon N."/>
            <person name="Hawkins T."/>
            <person name="Haydu L."/>
            <person name="Ho I."/>
            <person name="Huang W."/>
            <person name="Israni S."/>
            <person name="Jett J."/>
            <person name="Kadner K."/>
            <person name="Kimball H."/>
            <person name="Kobayashi A."/>
            <person name="Larionov V."/>
            <person name="Leem S.-H."/>
            <person name="Lopez F."/>
            <person name="Lou Y."/>
            <person name="Lowry S."/>
            <person name="Malfatti S."/>
            <person name="Martinez D."/>
            <person name="McCready P.M."/>
            <person name="Medina C."/>
            <person name="Morgan J."/>
            <person name="Nelson K."/>
            <person name="Nolan M."/>
            <person name="Ovcharenko I."/>
            <person name="Pitluck S."/>
            <person name="Pollard M."/>
            <person name="Popkie A.P."/>
            <person name="Predki P."/>
            <person name="Quan G."/>
            <person name="Ramirez L."/>
            <person name="Rash S."/>
            <person name="Retterer J."/>
            <person name="Rodriguez A."/>
            <person name="Rogers S."/>
            <person name="Salamov A."/>
            <person name="Salazar A."/>
            <person name="She X."/>
            <person name="Smith D."/>
            <person name="Slezak T."/>
            <person name="Solovyev V."/>
            <person name="Thayer N."/>
            <person name="Tice H."/>
            <person name="Tsai M."/>
            <person name="Ustaszewska A."/>
            <person name="Vo N."/>
            <person name="Wagner M."/>
            <person name="Wheeler J."/>
            <person name="Wu K."/>
            <person name="Xie G."/>
            <person name="Yang J."/>
            <person name="Dubchak I."/>
            <person name="Furey T.S."/>
            <person name="DeJong P."/>
            <person name="Dickson M."/>
            <person name="Gordon D."/>
            <person name="Eichler E.E."/>
            <person name="Pennacchio L.A."/>
            <person name="Richardson P."/>
            <person name="Stubbs L."/>
            <person name="Rokhsar D.S."/>
            <person name="Myers R.M."/>
            <person name="Rubin E.M."/>
            <person name="Lucas S.M."/>
        </authorList>
    </citation>
    <scope>NUCLEOTIDE SEQUENCE [LARGE SCALE GENOMIC DNA]</scope>
</reference>
<reference key="4">
    <citation type="journal article" date="1975" name="Nature">
        <title>Molecular conservation of 74 amino acid sequence of ubiquitin between cattle and man.</title>
        <authorList>
            <person name="Schlesinger D.H."/>
            <person name="Goldstein G."/>
        </authorList>
    </citation>
    <scope>PROTEIN SEQUENCE OF 1-74</scope>
</reference>
<reference key="5">
    <citation type="submission" date="2008-12" db="UniProtKB">
        <authorList>
            <person name="Lubec G."/>
            <person name="Chen W.-Q."/>
            <person name="Sun Y."/>
        </authorList>
    </citation>
    <scope>PROTEIN SEQUENCE OF 1-27; 30-42 AND 55-72</scope>
    <scope>IDENTIFICATION BY MASS SPECTROMETRY</scope>
    <source>
        <tissue>Fetal brain cortex</tissue>
    </source>
</reference>
<reference key="6">
    <citation type="journal article" date="2006" name="J. Biol. Chem.">
        <title>Alzheimer disease-specific conformation of hyperphosphorylated paired helical filament-tau is polyubiquitinated through Lys-48, Lys-11, and Lys-6 ubiquitin conjugation.</title>
        <authorList>
            <person name="Cripps D."/>
            <person name="Thomas S.N."/>
            <person name="Jeng Y."/>
            <person name="Yang F."/>
            <person name="Davies P."/>
            <person name="Yang A.J."/>
        </authorList>
    </citation>
    <scope>PROTEIN SEQUENCE OF 1-27 AND 43-54</scope>
    <scope>UBIQUITINATION AT LYS-6; LYS-11 AND LYS-48</scope>
    <scope>IDENTIFICATION BY MASS SPECTROMETRY</scope>
</reference>
<reference key="7">
    <citation type="journal article" date="1987" name="Nucleic Acids Res.">
        <title>cDNA encoding a human homolog of yeast ubiquitin 1.</title>
        <authorList>
            <person name="Salvesen G."/>
            <person name="Lloyd C."/>
            <person name="Farley D."/>
        </authorList>
    </citation>
    <scope>NUCLEOTIDE SEQUENCE [MRNA] OF 40-128</scope>
</reference>
<reference key="8">
    <citation type="journal article" date="2004" name="FEBS Lett.">
        <title>Ubiquilin interacts with ubiquitylated proteins and proteasome through its ubiquitin-associated and ubiquitin-like domains.</title>
        <authorList>
            <person name="Ko H.S."/>
            <person name="Uehara T."/>
            <person name="Tsuruma K."/>
            <person name="Nomura Y."/>
        </authorList>
    </citation>
    <scope>INTERACTION WITH UBQLN1</scope>
</reference>
<reference key="9">
    <citation type="journal article" date="2006" name="Mol. Cell">
        <title>Differential regulation of EGF receptor internalization and degradation by multiubiquitination within the kinase domain.</title>
        <authorList>
            <person name="Huang F."/>
            <person name="Kirkpatrick D."/>
            <person name="Jiang X."/>
            <person name="Gygi S.P."/>
            <person name="Sorkin A."/>
        </authorList>
    </citation>
    <scope>FUNCTION</scope>
    <scope>UBIQUITINATION AT LYS-11; LYS-29; LYS-48 AND LYS-63</scope>
    <scope>IDENTIFICATION BY MASS SPECTROMETRY</scope>
</reference>
<reference key="10">
    <citation type="journal article" date="2004" name="J. Biol. Chem.">
        <title>Functional regulation of FEZ1 by the U-box-type ubiquitin ligase E4B contributes to neuritogenesis.</title>
        <authorList>
            <person name="Okumura F."/>
            <person name="Hatakeyama S."/>
            <person name="Matsumoto M."/>
            <person name="Kamura T."/>
            <person name="Nakayama K."/>
        </authorList>
    </citation>
    <scope>UBIQUITINATION AT LYS-27</scope>
</reference>
<reference key="11">
    <citation type="journal article" date="2008" name="Proc. Natl. Acad. Sci. U.S.A.">
        <title>Polyubiquitination of proliferating cell nuclear antigen by HLTF and SHPRH prevents genomic instability from stalled replication forks.</title>
        <authorList>
            <person name="Motegi A."/>
            <person name="Liaw H.-J."/>
            <person name="Lee K.-Y."/>
            <person name="Roest H.P."/>
            <person name="Maas A."/>
            <person name="Wu X."/>
            <person name="Moinova H."/>
            <person name="Markowitz S.D."/>
            <person name="Ding H."/>
            <person name="Hoeijmakers J.H.J."/>
            <person name="Myung K."/>
        </authorList>
    </citation>
    <scope>UBIQUITINATION AT LYS-63</scope>
    <scope>MUTAGENESIS OF LYS-48 AND LYS-63</scope>
</reference>
<reference key="12">
    <citation type="journal article" date="2009" name="Biochem. Soc. Trans.">
        <title>The emerging complexity of protein ubiquitination.</title>
        <authorList>
            <person name="Komander D."/>
        </authorList>
    </citation>
    <scope>REVIEW</scope>
    <scope>FUNCTION</scope>
</reference>
<reference key="13">
    <citation type="journal article" date="2009" name="Science">
        <title>Lysine acetylation targets protein complexes and co-regulates major cellular functions.</title>
        <authorList>
            <person name="Choudhary C."/>
            <person name="Kumar C."/>
            <person name="Gnad F."/>
            <person name="Nielsen M.L."/>
            <person name="Rehman M."/>
            <person name="Walther T.C."/>
            <person name="Olsen J.V."/>
            <person name="Mann M."/>
        </authorList>
    </citation>
    <scope>IDENTIFICATION BY MASS SPECTROMETRY [LARGE SCALE ANALYSIS]</scope>
</reference>
<reference key="14">
    <citation type="journal article" date="2011" name="BMC Syst. Biol.">
        <title>Initial characterization of the human central proteome.</title>
        <authorList>
            <person name="Burkard T.R."/>
            <person name="Planyavsky M."/>
            <person name="Kaupe I."/>
            <person name="Breitwieser F.P."/>
            <person name="Buerckstuemmer T."/>
            <person name="Bennett K.L."/>
            <person name="Superti-Furga G."/>
            <person name="Colinge J."/>
        </authorList>
    </citation>
    <scope>IDENTIFICATION BY MASS SPECTROMETRY [LARGE SCALE ANALYSIS]</scope>
</reference>
<reference key="15">
    <citation type="journal article" date="2013" name="Proc. Natl. Acad. Sci. U.S.A.">
        <title>A ribosome-specialized translation initiation pathway is required for cap-dependent translation of vesicular stomatitis virus mRNAs.</title>
        <authorList>
            <person name="Lee A.S."/>
            <person name="Burdeinick-Kerr R."/>
            <person name="Whelan S.P."/>
        </authorList>
    </citation>
    <scope>FUNCTION</scope>
    <scope>SUBUNIT</scope>
</reference>
<reference key="16">
    <citation type="journal article" date="2014" name="Biochem. J.">
        <title>Parkin is activated by PINK1-dependent phosphorylation of ubiquitin at Ser65.</title>
        <authorList>
            <person name="Kazlauskaite A."/>
            <person name="Kondapalli C."/>
            <person name="Gourlay R."/>
            <person name="Campbell D.G."/>
            <person name="Ritorto M.S."/>
            <person name="Hofmann K."/>
            <person name="Alessi D.R."/>
            <person name="Knebel A."/>
            <person name="Trost M."/>
            <person name="Muqit M.M."/>
        </authorList>
    </citation>
    <scope>PHOSPHORYLATION AT SER-65</scope>
    <scope>MUTAGENESIS OF SER-65</scope>
</reference>
<reference key="17">
    <citation type="journal article" date="2014" name="Curr. Opin. Struct. Biol.">
        <title>A new system for naming ribosomal proteins.</title>
        <authorList>
            <person name="Ban N."/>
            <person name="Beckmann R."/>
            <person name="Cate J.H.D."/>
            <person name="Dinman J.D."/>
            <person name="Dragon F."/>
            <person name="Ellis S.R."/>
            <person name="Lafontaine D.L.J."/>
            <person name="Lindahl L."/>
            <person name="Liljas A."/>
            <person name="Lipton J.M."/>
            <person name="McAlear M.A."/>
            <person name="Moore P.B."/>
            <person name="Noller H.F."/>
            <person name="Ortega J."/>
            <person name="Panse V.G."/>
            <person name="Ramakrishnan V."/>
            <person name="Spahn C.M.T."/>
            <person name="Steitz T.A."/>
            <person name="Tchorzewski M."/>
            <person name="Tollervey D."/>
            <person name="Warren A.J."/>
            <person name="Williamson J.R."/>
            <person name="Wilson D."/>
            <person name="Yonath A."/>
            <person name="Yusupov M."/>
        </authorList>
    </citation>
    <scope>NOMENCLATURE</scope>
</reference>
<reference key="18">
    <citation type="journal article" date="2014" name="J. Cell Biol.">
        <title>PINK1 phosphorylates ubiquitin to activate Parkin E3 ubiquitin ligase activity.</title>
        <authorList>
            <person name="Kane L.A."/>
            <person name="Lazarou M."/>
            <person name="Fogel A.I."/>
            <person name="Li Y."/>
            <person name="Yamano K."/>
            <person name="Sarraf S.A."/>
            <person name="Banerjee S."/>
            <person name="Youle R.J."/>
        </authorList>
    </citation>
    <scope>PHOSPHORYLATION AT SER-65</scope>
    <scope>MUTAGENESIS OF SER-65</scope>
</reference>
<reference key="19">
    <citation type="journal article" date="2014" name="Nature">
        <title>Ubiquitin is phosphorylated by PINK1 to activate parkin.</title>
        <authorList>
            <person name="Koyano F."/>
            <person name="Okatsu K."/>
            <person name="Kosako H."/>
            <person name="Tamura Y."/>
            <person name="Go E."/>
            <person name="Kimura M."/>
            <person name="Kimura Y."/>
            <person name="Tsuchiya H."/>
            <person name="Yoshihara H."/>
            <person name="Hirokawa T."/>
            <person name="Endo T."/>
            <person name="Fon E.A."/>
            <person name="Trempe J.F."/>
            <person name="Saeki Y."/>
            <person name="Tanaka K."/>
            <person name="Matsuda N."/>
        </authorList>
    </citation>
    <scope>PHOSPHORYLATION AT SER-65</scope>
    <scope>MUTAGENESIS OF SER-65</scope>
</reference>
<reference key="20">
    <citation type="journal article" date="2014" name="PLoS Genet.">
        <title>Phosphorylation of mitochondrial polyubiquitin by PINK1 promotes Parkin mitochondrial tethering.</title>
        <authorList>
            <person name="Shiba-Fukushima K."/>
            <person name="Arano T."/>
            <person name="Matsumoto G."/>
            <person name="Inoshita T."/>
            <person name="Yoshida S."/>
            <person name="Ishihama Y."/>
            <person name="Ryu K.Y."/>
            <person name="Nukina N."/>
            <person name="Hattori N."/>
            <person name="Imai Y."/>
        </authorList>
    </citation>
    <scope>PHOSPHORYLATION AT SER-65</scope>
    <scope>MUTAGENESIS OF SER-65</scope>
</reference>
<reference key="21">
    <citation type="journal article" date="2015" name="EMBO J.">
        <title>Ubiquitin Ser65 phosphorylation affects ubiquitin structure, chain assembly and hydrolysis.</title>
        <authorList>
            <person name="Wauer T."/>
            <person name="Swatek K.N."/>
            <person name="Wagstaff J.L."/>
            <person name="Gladkova C."/>
            <person name="Pruneda J.N."/>
            <person name="Michel M.A."/>
            <person name="Gersch M."/>
            <person name="Johnson C.M."/>
            <person name="Freund S.M."/>
            <person name="Komander D."/>
        </authorList>
    </citation>
    <scope>PHOSPHORYLATION AT SER-65</scope>
</reference>
<reference key="22">
    <citation type="journal article" date="2017" name="Mol. Cell">
        <title>Ubiquitin Modification by the E3 Ligase/ADP-Ribosyltransferase Dtx3L/Parp9.</title>
        <authorList>
            <person name="Yang C.S."/>
            <person name="Jividen K."/>
            <person name="Spencer A."/>
            <person name="Dworak N."/>
            <person name="Ni L."/>
            <person name="Oostdyk L.T."/>
            <person name="Chatterjee M."/>
            <person name="Kusmider B."/>
            <person name="Reon B."/>
            <person name="Parlak M."/>
            <person name="Gorbunova V."/>
            <person name="Abbas T."/>
            <person name="Jeffery E."/>
            <person name="Sherman N.E."/>
            <person name="Paschal B.M."/>
        </authorList>
    </citation>
    <scope>ADP-RIBOSYLATION AT GLY-76</scope>
    <scope>MUTAGENESIS OF HIS-68; ARG-72; ARG-74 AND GLY-76</scope>
</reference>
<reference key="23">
    <citation type="journal article" date="2020" name="Mol. Cell">
        <title>Threonine ADP-ribosylation of ubiquitin by a bacterial effector family blocks host ubiquitination.</title>
        <authorList>
            <person name="Yan F."/>
            <person name="Huang C."/>
            <person name="Wang X."/>
            <person name="Tan J."/>
            <person name="Cheng S."/>
            <person name="Wan M."/>
            <person name="Wang Z."/>
            <person name="Wang S."/>
            <person name="Luo S."/>
            <person name="Li A."/>
            <person name="Guo X."/>
            <person name="Feng M."/>
            <person name="Liu X."/>
            <person name="Zhu Y."/>
            <person name="Zhou Y."/>
        </authorList>
    </citation>
    <scope>ADP-RIBOSYLATION AT THR-66 (MICROBIAL INFECTION)</scope>
</reference>
<reference key="24">
    <citation type="journal article" date="2021" name="Nat. Chem. Biol.">
        <title>K29-linked ubiquitin signaling regulates proteotoxic stress response and cell cycle.</title>
        <authorList>
            <person name="Yu Y."/>
            <person name="Zheng Q."/>
            <person name="Erramilli S.K."/>
            <person name="Pan M."/>
            <person name="Park S."/>
            <person name="Xie Y."/>
            <person name="Li J."/>
            <person name="Fei J."/>
            <person name="Kossiakoff A.A."/>
            <person name="Liu L."/>
            <person name="Zhao M."/>
        </authorList>
    </citation>
    <scope>FUNCTION (UBIQUITIN)</scope>
    <scope>UBIQUITINATION AT LYS-29</scope>
</reference>
<reference key="25">
    <citation type="journal article" date="2024" name="Cell Res.">
        <title>SMYD5 is a ribosomal methyltransferase that catalyzes RPL40 lysine methylation to enhance translation output and promote hepatocellular carcinoma.</title>
        <authorList>
            <person name="Miao B."/>
            <person name="Ge L."/>
            <person name="He C."/>
            <person name="Wang X."/>
            <person name="Wu J."/>
            <person name="Li X."/>
            <person name="Chen K."/>
            <person name="Wan J."/>
            <person name="Xing S."/>
            <person name="Ren L."/>
            <person name="Shi Z."/>
            <person name="Liu S."/>
            <person name="Hu Y."/>
            <person name="Chen J."/>
            <person name="Yu Y."/>
            <person name="Feng L."/>
            <person name="Flores N.M."/>
            <person name="Liang Z."/>
            <person name="Xu X."/>
            <person name="Wang R."/>
            <person name="Zhou J."/>
            <person name="Fan J."/>
            <person name="Xiang B."/>
            <person name="Li E."/>
            <person name="Mao Y."/>
            <person name="Cheng J."/>
            <person name="Zhao K."/>
            <person name="Mazur P.K."/>
            <person name="Cai J."/>
            <person name="Lan F."/>
        </authorList>
    </citation>
    <scope>FUNCTION (LARGE RIBOSOMAL SUBUNIT PROTEIN EL40)</scope>
    <scope>SUBUNIT (LARGE RIBOSOMAL SUBUNIT PROTEIN EL40)</scope>
    <scope>SUBCELLULAR LOCATION (LARGE RIBOSOMAL SUBUNIT PROTEIN EL40)</scope>
    <scope>METHYLATION AT LYS-98</scope>
    <scope>MUTAGENESIS OF LYS-98</scope>
</reference>
<reference key="26">
    <citation type="journal article" date="2024" name="Nature">
        <title>SMYD5 methylation of rpL40 links ribosomal output to gastric cancer.</title>
        <authorList>
            <person name="Park J."/>
            <person name="Wu J."/>
            <person name="Szkop K.J."/>
            <person name="Jeong J."/>
            <person name="Jovanovic P."/>
            <person name="Husmann D."/>
            <person name="Flores N.M."/>
            <person name="Francis J.W."/>
            <person name="Chen Y.C."/>
            <person name="Benitez A.M."/>
            <person name="Zahn E."/>
            <person name="Song S."/>
            <person name="Ajani J.A."/>
            <person name="Wang L."/>
            <person name="Singh K."/>
            <person name="Larsson O."/>
            <person name="Garcia B.A."/>
            <person name="Topisirovic I."/>
            <person name="Gozani O."/>
            <person name="Mazur P.K."/>
        </authorList>
    </citation>
    <scope>FUNCTION (LARGE RIBOSOMAL SUBUNIT PROTEIN EL40)</scope>
    <scope>SUBUNIT (LARGE RIBOSOMAL SUBUNIT PROTEIN EL40)</scope>
    <scope>SUBCELLULAR LOCATION (LARGE RIBOSOMAL SUBUNIT PROTEIN EL40)</scope>
    <scope>METHYLATION AT LYS-98</scope>
    <scope>MUTAGENESIS OF LYS-98</scope>
</reference>
<reference key="27">
    <citation type="journal article" date="2012" name="J. Biomol. NMR">
        <title>Determination of structural fluctuations of proteins from structure-based calculations of residual dipolar couplings.</title>
        <authorList>
            <person name="Montalvao R.W."/>
            <person name="De Simone A."/>
            <person name="Vendruscolo M."/>
        </authorList>
    </citation>
    <scope>STRUCTURE BY NMR OF 1-76</scope>
</reference>
<reference key="28">
    <citation type="journal article" date="2013" name="Nature">
        <title>Structures of the human and Drosophila 80S ribosome.</title>
        <authorList>
            <person name="Anger A.M."/>
            <person name="Armache J.P."/>
            <person name="Berninghausen O."/>
            <person name="Habeck M."/>
            <person name="Subklewe M."/>
            <person name="Wilson D.N."/>
            <person name="Beckmann R."/>
        </authorList>
    </citation>
    <scope>STRUCTURE BY ELECTRON MICROSCOPY (5.0 ANGSTROMS) OF 77-128 IN COMPLEX WITHIN THE RIBOSOME</scope>
    <scope>FUNCTION</scope>
    <scope>SUBUNIT</scope>
    <scope>SUBCELLULAR LOCATION</scope>
</reference>
<reference evidence="28" key="29">
    <citation type="journal article" date="2015" name="Mol. Cell">
        <title>K29-selective ubiquitin binding domain reveals structural basis of specificity and heterotypic nature of K29 polyubiquitin.</title>
        <authorList>
            <person name="Kristariyanto Y.A."/>
            <person name="Abdul Rehman S.A."/>
            <person name="Campbell D.G."/>
            <person name="Morrice N.A."/>
            <person name="Johnson C."/>
            <person name="Toth R."/>
            <person name="Kulathu Y."/>
        </authorList>
    </citation>
    <scope>X-RAY CRYSTALLOGRAPHY (3.03 ANGSTROMS) OF 1-76 IN COMPLEX WITH ZRANB1</scope>
    <scope>UBIQUITINATION AT LYS-29</scope>
</reference>
<reference key="30">
    <citation type="journal article" date="2015" name="Mol. Cell">
        <title>Assembly and specific recognition of K29- and K33-linked polyubiquitin.</title>
        <authorList>
            <person name="Michel M.A."/>
            <person name="Elliott P.R."/>
            <person name="Swatek K.N."/>
            <person name="Simicek M."/>
            <person name="Pruneda J.N."/>
            <person name="Wagstaff J.L."/>
            <person name="Freund S.M."/>
            <person name="Komander D."/>
        </authorList>
    </citation>
    <scope>X-RAY CRYSTALLOGRAPHY (1.68 ANGSTROMS) OF 1-76 IN COMPLEX WITH ZRANB1</scope>
    <scope>UBIQUITINATION AT LYS-29 AND LYS-33</scope>
</reference>
<reference evidence="29" key="31">
    <citation type="journal article" date="2020" name="Nat. Commun.">
        <title>Structural snapshots of human pre-60S ribosomal particles before and after nuclear export.</title>
        <authorList>
            <person name="Liang X."/>
            <person name="Zuo M.Q."/>
            <person name="Zhang Y."/>
            <person name="Li N."/>
            <person name="Ma C."/>
            <person name="Dong M.Q."/>
            <person name="Gao N."/>
        </authorList>
    </citation>
    <scope>STRUCTURE BY ELECTRON MICROSCOPY (3.09 ANGSTROMS)</scope>
    <scope>FUNCTION</scope>
    <scope>SUBUNIT</scope>
</reference>